<keyword id="KW-0002">3D-structure</keyword>
<keyword id="KW-0877">Alternative promoter usage</keyword>
<keyword id="KW-0025">Alternative splicing</keyword>
<keyword id="KW-0106">Calcium</keyword>
<keyword id="KW-1003">Cell membrane</keyword>
<keyword id="KW-0968">Cytoplasmic vesicle</keyword>
<keyword id="KW-0225">Disease variant</keyword>
<keyword id="KW-0947">Limb-girdle muscular dystrophy</keyword>
<keyword id="KW-0446">Lipid-binding</keyword>
<keyword id="KW-0472">Membrane</keyword>
<keyword id="KW-0479">Metal-binding</keyword>
<keyword id="KW-0597">Phosphoprotein</keyword>
<keyword id="KW-1267">Proteomics identification</keyword>
<keyword id="KW-1185">Reference proteome</keyword>
<keyword id="KW-0677">Repeat</keyword>
<keyword id="KW-0735">Signal-anchor</keyword>
<keyword id="KW-0812">Transmembrane</keyword>
<keyword id="KW-1133">Transmembrane helix</keyword>
<sequence length="2080" mass="237295">MLRVFILYAENVHTPDTDISDAYCSAVFAGVKKRTKVIKNSVNPVWNEGFEWDLKGIPLDQGSELHVVVKDHETMGRNRFLGEAKVPLREVLATPSLSASFNAPLLDTKKQPTGASLVLQVSYTPLPGAVPLFPPPTPLEPSPTLPDLDVVADTGGEEDTEDQGLTGDEAEPFLDQSGGPGAPTTPRKLPSRPPPHYPGIKRKRSAPTSRKLLSDKPQDFQIRVQVIEGRQLPGVNIKPVVKVTAAGQTKRTRIHKGNSPLFNETLFFNLFDSPGELFDEPIFITVVDSRSLRTDALLGEFRMDVGTIYREPRHAYLRKWLLLSDPDDFSAGARGYLKTSLCVLGPGDEAPLERKDPSEDKEDIESNLLRPTGVALRGAHFCLKVFRAEDLPQMDDAVMDNVKQIFGFESNKKNLVDPFVEVSFAGKMLCSKILEKTANPQWNQNITLPAMFPSMCEKMRIRIIDWDRLTHNDIVATTYLSMSKISAPGGEIEEEPAGAVKPSKASDLDDYLGFLPTFGPCYINLYGSPREFTGFPDPYTELNTGKGEGVAYRGRLLLSLETKLVEHSEQKVEDLPADDILRVEKYLRRRKYSLFAAFYSATMLQDVDDAIQFEVSIGNYGNKFDMTCLPLASTTQYSRAVFDGCHYYYLPWGNVKPVVVLSSYWEDISHRIETQNQLLGIADRLEAGLEQVHLALKAQCSTEDVDSLVAQLTDELIAGCSQPLGDIHETPSATHLDQYLYQLRTHHLSQITEAALALKLGHSELPAALEQAEDWLLRLRALAEEPQNSLPDIVIWMLQGDKRVAYQRVPAHQVLFSRRGANYCGKNCGKLQTIFLKYPMEKVPGARMPVQIRVKLWFGLSVDEKEFNQFAEGKLSVFAETYENETKLALVGNWGTTGLTYPKFSDVTGKIKLPKDSFRPSAGWTWAGDWFVCPEKTLLHDMDAGHLSFVEEVFENQTRLPGGQWIYMSDNYTDVNGEKVLPKDDIECPLGWKWEDEEWSTDLNRAVDEQGWEYSITIPPERKPKHWVPAEKMYYTHRRRRWVRLRRRDLSQMEALKRHRQAEAEGEGWEYASLFGWKFHLEYRKTDAFRRRRWRRRMEPLEKTGPAAVFALEGALGGVMDDKSEDSMSVSTLSFGVNRPTISCIFDYGNRYHLRCYMYQARDLAAMDKDSFSDPYAIVSFLHQSQKTVVVKNTLNPTWDQTLIFYEIEIFGEPATVAEQPPSIVVELYDHDTYGADEFMGRCICQPSLERMPRLAWFPLTRGSQPSGELLASFELIQREKPAIHHIPGFEVQETSRILDESEDTDLPYPPPQREANIYMVPQNIKPALQRTAIEILAWGLRNMKSYQLANISSPSLVVECGGQTVQSCVIRNLRKNPNFDICTLFMEVMLPREELYCPPITVKVIDNRQFGRRPVVGQCTIRSLESFLCDPYSAESPSPQGGPDDVSLLSPGEDVLIDIDDKEPLIPIQEEEFIDWWSKFFASIGEREKCGSYLEKDFDTLKVYDTQLENVEAFEGLSDFCNTFKLYRGKTQEETEDPSVIGEFKGLFKIYPLPEDPAIPMPPRQFHQLAAQGPQECLVRIYIVRAFGLQPKDPNGKCDPYIKISIGKKSVSDQDNYIPCTLEPVFGKMFELTCTLPLEKDLKITLYDYDLLSKDEKIGETVVDLENRLLSKFGARCGLPQTYCVSGPNQWRDQLRPSQLLHLFCQQHRVKAPVYRTDRVMFQDKEYSIEEIEAGRIPNPHLGPVEERLALHVLQQQGLVPEHVESRPLYSPLQPDIEQGKLQMWVDLFPKALGRPGPPFNITPRRARRFFLRCIIWNTRDVILDDLSLTGEKMSDIYVKGWMIGFEEHKQKTDVHYRSLGGEGNFNWRFIFPFDYLPAEQVCTIAKKDAFWRLDKTESKIPARVVFQIWDNDKFSFDDFLGSLQLDLNRMPKPAKTAKKCSLDQLDDAFHPEWFVSLFEQKTVKGWWPCVAEEGEKKILAGKLEMTLEIVAESEHEERPAGQGRDEPNMNPKLEDPRRPDTSFLWFTSPYKTMKFILWRRFRWAIILFIILFILLLFLAIFIYAFPNYAAMKLVKPFS</sequence>
<feature type="chain" id="PRO_0000057879" description="Dysferlin">
    <location>
        <begin position="1"/>
        <end position="2080"/>
    </location>
</feature>
<feature type="topological domain" description="Cytoplasmic" evidence="2">
    <location>
        <begin position="1"/>
        <end position="2046"/>
    </location>
</feature>
<feature type="transmembrane region" description="Helical" evidence="2">
    <location>
        <begin position="2047"/>
        <end position="2067"/>
    </location>
</feature>
<feature type="topological domain" description="Extracellular" evidence="2">
    <location>
        <begin position="2068"/>
        <end position="2080"/>
    </location>
</feature>
<feature type="domain" description="C2 1" evidence="3">
    <location>
        <begin position="1"/>
        <end position="101"/>
    </location>
</feature>
<feature type="domain" description="C2 2" evidence="3">
    <location>
        <begin position="203"/>
        <end position="321"/>
    </location>
</feature>
<feature type="domain" description="C2 3" evidence="3">
    <location>
        <begin position="360"/>
        <end position="496"/>
    </location>
</feature>
<feature type="domain" description="C2 4" evidence="3">
    <location>
        <begin position="1136"/>
        <end position="1262"/>
    </location>
</feature>
<feature type="domain" description="C2 5" evidence="3">
    <location>
        <begin position="1310"/>
        <end position="1438"/>
    </location>
</feature>
<feature type="domain" description="C2 6" evidence="3">
    <location>
        <begin position="1561"/>
        <end position="1679"/>
    </location>
</feature>
<feature type="domain" description="C2 7" evidence="3">
    <location>
        <begin position="1795"/>
        <end position="1943"/>
    </location>
</feature>
<feature type="region of interest" description="Disordered" evidence="4">
    <location>
        <begin position="132"/>
        <end position="215"/>
    </location>
</feature>
<feature type="region of interest" description="Disordered" evidence="4">
    <location>
        <begin position="1995"/>
        <end position="2017"/>
    </location>
</feature>
<feature type="compositionally biased region" description="Pro residues" evidence="4">
    <location>
        <begin position="132"/>
        <end position="144"/>
    </location>
</feature>
<feature type="compositionally biased region" description="Acidic residues" evidence="4">
    <location>
        <begin position="155"/>
        <end position="172"/>
    </location>
</feature>
<feature type="binding site" evidence="33">
    <location>
        <position position="18"/>
    </location>
    <ligand>
        <name>Ca(2+)</name>
        <dbReference type="ChEBI" id="CHEBI:29108"/>
        <label>1</label>
    </ligand>
</feature>
<feature type="binding site" evidence="33">
    <location>
        <position position="19"/>
    </location>
    <ligand>
        <name>Ca(2+)</name>
        <dbReference type="ChEBI" id="CHEBI:29108"/>
        <label>1</label>
    </ligand>
</feature>
<feature type="binding site" evidence="33">
    <location>
        <position position="21"/>
    </location>
    <ligand>
        <name>Ca(2+)</name>
        <dbReference type="ChEBI" id="CHEBI:29108"/>
        <label>1</label>
    </ligand>
</feature>
<feature type="binding site" evidence="33">
    <location>
        <position position="40"/>
    </location>
    <ligand>
        <name>Ca(2+)</name>
        <dbReference type="ChEBI" id="CHEBI:29108"/>
        <label>1</label>
    </ligand>
</feature>
<feature type="binding site" evidence="3">
    <location>
        <position position="1168"/>
    </location>
    <ligand>
        <name>Ca(2+)</name>
        <dbReference type="ChEBI" id="CHEBI:29108"/>
        <label>2</label>
    </ligand>
</feature>
<feature type="binding site" evidence="3">
    <location>
        <position position="1174"/>
    </location>
    <ligand>
        <name>Ca(2+)</name>
        <dbReference type="ChEBI" id="CHEBI:29108"/>
        <label>2</label>
    </ligand>
</feature>
<feature type="binding site" evidence="3">
    <location>
        <position position="1230"/>
    </location>
    <ligand>
        <name>Ca(2+)</name>
        <dbReference type="ChEBI" id="CHEBI:29108"/>
        <label>2</label>
    </ligand>
</feature>
<feature type="binding site" evidence="3">
    <location>
        <position position="1232"/>
    </location>
    <ligand>
        <name>Ca(2+)</name>
        <dbReference type="ChEBI" id="CHEBI:29108"/>
        <label>2</label>
    </ligand>
</feature>
<feature type="binding site" evidence="3">
    <location>
        <position position="1594"/>
    </location>
    <ligand>
        <name>Ca(2+)</name>
        <dbReference type="ChEBI" id="CHEBI:29108"/>
        <label>3</label>
    </ligand>
</feature>
<feature type="binding site" evidence="3">
    <location>
        <position position="1600"/>
    </location>
    <ligand>
        <name>Ca(2+)</name>
        <dbReference type="ChEBI" id="CHEBI:29108"/>
        <label>3</label>
    </ligand>
</feature>
<feature type="binding site" evidence="3">
    <location>
        <position position="1649"/>
    </location>
    <ligand>
        <name>Ca(2+)</name>
        <dbReference type="ChEBI" id="CHEBI:29108"/>
        <label>3</label>
    </ligand>
</feature>
<feature type="binding site" evidence="3">
    <location>
        <position position="1651"/>
    </location>
    <ligand>
        <name>Ca(2+)</name>
        <dbReference type="ChEBI" id="CHEBI:29108"/>
        <label>3</label>
    </ligand>
</feature>
<feature type="binding site" evidence="3">
    <location>
        <position position="1914"/>
    </location>
    <ligand>
        <name>Ca(2+)</name>
        <dbReference type="ChEBI" id="CHEBI:29108"/>
        <label>4</label>
    </ligand>
</feature>
<feature type="binding site" evidence="3">
    <location>
        <position position="1917"/>
    </location>
    <ligand>
        <name>Ca(2+)</name>
        <dbReference type="ChEBI" id="CHEBI:29108"/>
        <label>4</label>
    </ligand>
</feature>
<feature type="binding site" evidence="3">
    <location>
        <position position="1920"/>
    </location>
    <ligand>
        <name>Ca(2+)</name>
        <dbReference type="ChEBI" id="CHEBI:29108"/>
        <label>4</label>
    </ligand>
</feature>
<feature type="modified residue" description="Phosphothreonine" evidence="42">
    <location>
        <position position="166"/>
    </location>
</feature>
<feature type="splice variant" id="VSP_035924" description="In isoform 8, isoform 9, isoform 10, isoform 11, isoform 12, isoform 13 and isoform 14." evidence="38 39">
    <original>MLRVFILYAENVHTPDTDISDAYCSAVFA</original>
    <variation>MLCCLLVRASNLPSAKKDRRSDPVASLTFR</variation>
    <location>
        <begin position="1"/>
        <end position="29"/>
    </location>
</feature>
<feature type="splice variant" id="VSP_035925" description="In isoform 2, isoform 5, isoform 7, isoform 8, isoform 11 and isoform 13." evidence="39">
    <original>A</original>
    <variation>AGGGQSRAETWSLLSDSTMDTRYSGKKWPAPT</variation>
    <location>
        <position position="152"/>
    </location>
</feature>
<feature type="splice variant" id="VSP_035926" description="In isoform 3, isoform 5, isoform 6, isoform 7, isoform 9, isoform 11, isoform 12, isoform 13 and isoform 15." evidence="39 40">
    <original>EEPAGAVKPSKASDL</original>
    <variation>V</variation>
    <location>
        <begin position="494"/>
        <end position="508"/>
    </location>
</feature>
<feature type="splice variant" id="VSP_035927" description="In isoform 4, isoform 6, isoform 7, isoform 10, isoform 12 and isoform 13." evidence="39">
    <original>Q</original>
    <variation>QLADGLSSLAPTNTASPPSSPH</variation>
    <location>
        <position position="1470"/>
    </location>
</feature>
<feature type="splice variant" id="VSP_035928" description="In isoform 15." evidence="40">
    <original>KPAKTAKKCSLDQLDDAFHPEWFVSLFEQKTVKGW</original>
    <variation>SSASSSRPPRPDCPARVGRQTDGPAHTPRVANMEL</variation>
    <location>
        <begin position="1934"/>
        <end position="1968"/>
    </location>
</feature>
<feature type="splice variant" id="VSP_035929" description="In isoform 15." evidence="40">
    <location>
        <begin position="1969"/>
        <end position="2080"/>
    </location>
</feature>
<feature type="sequence variant" id="VAR_057834" description="In LGMDR2; dbSNP:rs1553508863." evidence="31">
    <original>W</original>
    <variation>R</variation>
    <location>
        <position position="52"/>
    </location>
</feature>
<feature type="sequence variant" id="VAR_057835" description="In MMD1 and LGMDR2; Reduces calcium-sensitive phospholipid binding and interaction with AHNAK and AHNAK2; dbSNP:rs121908957." evidence="7 11 26">
    <original>V</original>
    <variation>D</variation>
    <location>
        <position position="67"/>
    </location>
</feature>
<feature type="sequence variant" id="VAR_057836" description="In dbSNP:rs772008300." evidence="31">
    <original>A</original>
    <variation>V</variation>
    <location>
        <position position="84"/>
    </location>
</feature>
<feature type="sequence variant" id="VAR_057837" description="In LGMDR2; dbSNP:rs200970855." evidence="31">
    <original>G</original>
    <variation>R</variation>
    <location>
        <position position="155"/>
    </location>
</feature>
<feature type="sequence variant" id="VAR_024853" description="In dbSNP:rs34999029." evidence="20 21 31">
    <original>A</original>
    <variation>E</variation>
    <location>
        <position position="170"/>
    </location>
</feature>
<feature type="sequence variant" id="VAR_024854" description="In dbSNP:rs13407355." evidence="20 31">
    <original>L</original>
    <variation>V</variation>
    <location>
        <position position="189"/>
    </location>
</feature>
<feature type="sequence variant" id="VAR_057838" description="In LGMDR2; dbSNP:rs141497053." evidence="31">
    <original>G</original>
    <variation>E</variation>
    <location>
        <position position="234"/>
    </location>
</feature>
<feature type="sequence variant" id="VAR_024855" description="Found in patients with isolated hyperCKemia; dbSNP:rs149827237." evidence="20 31">
    <original>R</original>
    <variation>W</variation>
    <location>
        <position position="253"/>
    </location>
</feature>
<feature type="sequence variant" id="VAR_024856" description="In pseudometabolic myopathy." evidence="20 31">
    <original>L</original>
    <variation>P</variation>
    <location>
        <position position="266"/>
    </location>
</feature>
<feature type="sequence variant" id="VAR_057839" description="In LGMDR2; dbSNP:rs1553522164." evidence="31">
    <original>I</original>
    <variation>T</variation>
    <location>
        <position position="284"/>
    </location>
</feature>
<feature type="sequence variant" id="VAR_024857" description="In MMD1; dbSNP:rs1258728780." evidence="20 31">
    <original>G</original>
    <variation>E</variation>
    <location>
        <position position="299"/>
    </location>
</feature>
<feature type="sequence variant" id="VAR_057840" description="In LGMDR2 and proximodistal myopathy; dbSNP:rs121908963." evidence="22 30 31">
    <original>G</original>
    <variation>R</variation>
    <location>
        <position position="299"/>
    </location>
</feature>
<feature type="sequence variant" id="VAR_057841" description="In MMD1; dbSNP:rs121908963." evidence="30">
    <original>G</original>
    <variation>W</variation>
    <location>
        <position position="299"/>
    </location>
</feature>
<feature type="sequence variant" id="VAR_057842" evidence="31">
    <original>G</original>
    <variation>A</variation>
    <location>
        <position position="335"/>
    </location>
</feature>
<feature type="sequence variant" id="VAR_057843" description="In proximodistal myopathy; dbSNP:rs766891289." evidence="31">
    <original>S</original>
    <variation>R</variation>
    <location>
        <position position="340"/>
    </location>
</feature>
<feature type="sequence variant" id="VAR_057844" description="In dbSNP:rs150724610." evidence="21 31">
    <original>V</original>
    <variation>L</variation>
    <location>
        <position position="374"/>
    </location>
</feature>
<feature type="sequence variant" id="VAR_057845" description="In MMD1." evidence="31">
    <original>FRAED</original>
    <variation>Y</variation>
    <location>
        <begin position="386"/>
        <end position="390"/>
    </location>
</feature>
<feature type="sequence variant" id="VAR_057846" description="In MMD1." evidence="18">
    <original>E</original>
    <variation>Q</variation>
    <location>
        <position position="389"/>
    </location>
</feature>
<feature type="sequence variant" id="VAR_057847" description="In dbSNP:rs886042389." evidence="31">
    <original>D</original>
    <variation>N</variation>
    <location>
        <position position="390"/>
    </location>
</feature>
<feature type="sequence variant" id="VAR_057848" description="In MMD1; dbSNP:rs886042093." evidence="31">
    <original>G</original>
    <variation>R</variation>
    <location>
        <position position="426"/>
    </location>
</feature>
<feature type="sequence variant" id="VAR_057849" description="In MMD1." evidence="17">
    <original>G</original>
    <variation>V</variation>
    <location>
        <position position="426"/>
    </location>
</feature>
<feature type="sequence variant" id="VAR_024858" description="In MMD1." evidence="20 31">
    <original>C</original>
    <variation>W</variation>
    <location>
        <position position="456"/>
    </location>
</feature>
<feature type="sequence variant" id="VAR_057850" description="In MMD1; dbSNP:rs121908962." evidence="27">
    <original>G</original>
    <variation>R</variation>
    <location>
        <position position="519"/>
    </location>
</feature>
<feature type="sequence variant" id="VAR_024859" description="In LGMDR2 and MMD1; also found in patients with isolated hyperCKemia; dbSNP:rs377735262." evidence="20 31">
    <original>R</original>
    <variation>W</variation>
    <location>
        <position position="555"/>
    </location>
</feature>
<feature type="sequence variant" id="VAR_057851" description="In MMD1 and LGMDR2; dbSNP:rs201049092." evidence="16 31">
    <original>G</original>
    <variation>R</variation>
    <location>
        <position position="618"/>
    </location>
</feature>
<feature type="sequence variant" id="VAR_057852" description="In LGMDR2; dbSNP:rs886043900." evidence="21">
    <original>G</original>
    <variation>R</variation>
    <location>
        <position position="621"/>
    </location>
</feature>
<feature type="sequence variant" id="VAR_057853" description="In LGMDR2; dbSNP:rs121908960." evidence="27">
    <original>D</original>
    <variation>Y</variation>
    <location>
        <position position="625"/>
    </location>
</feature>
<feature type="sequence variant" id="VAR_057854" description="In LGMDR2." evidence="31">
    <original>P</original>
    <variation>R</variation>
    <location>
        <position position="731"/>
    </location>
</feature>
<feature type="sequence variant" id="VAR_012308" description="In MMD1 and LGMDR2; dbSNP:rs121908956." evidence="6 25">
    <original>P</original>
    <variation>R</variation>
    <location>
        <position position="791"/>
    </location>
</feature>
<feature type="sequence variant" id="VAR_057855" description="In dbSNP:rs748636047." evidence="31">
    <original>R</original>
    <variation>Q</variation>
    <location>
        <position position="819"/>
    </location>
</feature>
<feature type="sequence variant" id="VAR_049055" description="In dbSNP:rs34671418.">
    <original>I</original>
    <variation>V</variation>
    <location>
        <position position="834"/>
    </location>
</feature>
<feature type="sequence variant" id="VAR_057856" description="In LGMDR2; uncertain significance; dbSNP:rs727503910." evidence="25 31">
    <original>W</original>
    <variation>C</variation>
    <location>
        <position position="930"/>
    </location>
</feature>
<feature type="sequence variant" id="VAR_024860" description="In MMD1 and LGMDR2; dbSNP:rs202218890." evidence="13 21">
    <original>R</original>
    <variation>W</variation>
    <location>
        <position position="959"/>
    </location>
</feature>
<feature type="sequence variant" id="VAR_057857" description="In MMD1; dbSNP:rs28937581." evidence="12 37">
    <original>W</original>
    <variation>C</variation>
    <location>
        <position position="999"/>
    </location>
</feature>
<feature type="sequence variant" id="VAR_024861" description="In dbSNP:rs34211915." evidence="13 16 31">
    <original>R</original>
    <variation>Q</variation>
    <location>
        <position position="1022"/>
    </location>
</feature>
<feature type="sequence variant" id="VAR_057858" description="In MMD1." evidence="31">
    <original>P</original>
    <variation>L</variation>
    <location>
        <position position="1029"/>
    </location>
</feature>
<feature type="sequence variant" id="VAR_024862" description="In LGMDR2; dbSNP:rs150877497." evidence="13 21 31">
    <original>R</original>
    <variation>Q</variation>
    <location>
        <position position="1038"/>
    </location>
</feature>
<feature type="sequence variant" id="VAR_057859" description="In MMD1; dbSNP:rs144598063." evidence="16">
    <original>R</original>
    <variation>C</variation>
    <location>
        <position position="1041"/>
    </location>
</feature>
<feature type="sequence variant" id="VAR_024863" description="In MMD1; dbNP:28939700; dbSNP:rs121908958." evidence="9 20 31">
    <original>R</original>
    <variation>H</variation>
    <location>
        <position position="1046"/>
    </location>
</feature>
<feature type="sequence variant" id="VAR_024864" evidence="25">
    <original>E</original>
    <variation>EAE</variation>
    <location>
        <position position="1065"/>
    </location>
</feature>
<feature type="sequence variant" id="VAR_049056" description="In dbSNP:rs34660230.">
    <original>A</original>
    <variation>P</variation>
    <location>
        <position position="1072"/>
    </location>
</feature>
<feature type="sequence variant" id="VAR_061170" description="In dbSNP:rs59915619.">
    <original>R</original>
    <variation>H</variation>
    <location>
        <position position="1096"/>
    </location>
</feature>
<feature type="sequence variant" id="VAR_024865" description="In LGMDR2; uncertain significance; dbSNP:rs148858485." evidence="20">
    <original>I</original>
    <variation>M</variation>
    <location>
        <position position="1208"/>
    </location>
</feature>
<feature type="sequence variant" id="VAR_057860" description="In LGMDR2; dbSNP:rs2152855991." evidence="31">
    <original>L</original>
    <variation>P</variation>
    <location>
        <position position="1228"/>
    </location>
</feature>
<feature type="sequence variant" id="VAR_020308" description="In dbSNP:rs2303603.">
    <original>R</original>
    <variation>H</variation>
    <location>
        <position position="1242"/>
    </location>
</feature>
<feature type="sequence variant" id="VAR_024866" description="In proximodistal myopathy." evidence="20 31">
    <original>L</original>
    <variation>V</variation>
    <location>
        <position position="1276"/>
    </location>
</feature>
<feature type="sequence variant" id="VAR_012309" description="In MMD1 and LGMDR2; dbSNP:rs121908954." evidence="36">
    <original>I</original>
    <variation>V</variation>
    <location>
        <position position="1298"/>
    </location>
</feature>
<feature type="sequence variant" id="VAR_035893" description="In a breast cancer sample; somatic mutation." evidence="24">
    <original>I</original>
    <variation>M</variation>
    <location>
        <position position="1325"/>
    </location>
</feature>
<feature type="sequence variant" id="VAR_057861" description="In dbSNP:rs145401010." evidence="31">
    <original>I</original>
    <variation>V</variation>
    <location>
        <position position="1325"/>
    </location>
</feature>
<feature type="sequence variant" id="VAR_024867" description="In dbSNP:rs61742872." evidence="13 20">
    <original>R</original>
    <variation>L</variation>
    <location>
        <position position="1331"/>
    </location>
</feature>
<feature type="sequence variant" id="VAR_024868" description="In MMD1 and LGMDR2; dbSNP:rs758993965." evidence="13 16 21">
    <original>E</original>
    <variation>K</variation>
    <location>
        <position position="1335"/>
    </location>
</feature>
<feature type="sequence variant" id="VAR_057862" description="In LGMDR2; dbSNP:rs757917335." evidence="22">
    <original>L</original>
    <variation>P</variation>
    <location>
        <position position="1341"/>
    </location>
</feature>
<feature type="sequence variant" id="VAR_035894" description="In a breast cancer sample; somatic mutation." evidence="24">
    <original>L</original>
    <variation>V</variation>
    <location>
        <position position="1349"/>
    </location>
</feature>
<feature type="sequence variant" id="VAR_024869" description="In dbSNP:rs139529811." evidence="20">
    <original>N</original>
    <variation>S</variation>
    <location>
        <position position="1351"/>
    </location>
</feature>
<feature type="sequence variant" id="VAR_057863" description="In MMD1; dbSNP:rs776472879." evidence="16">
    <original>C</original>
    <variation>R</variation>
    <location>
        <position position="1361"/>
    </location>
</feature>
<feature type="sequence variant" id="VAR_057864" description="In LGMDR2; dbSNP:rs757820496." evidence="16">
    <original>Y</original>
    <variation>C</variation>
    <location>
        <position position="1505"/>
    </location>
</feature>
<feature type="sequence variant" id="VAR_057865" description="In LGMDR2; dbSNP:rs76086153." evidence="31">
    <original>K</original>
    <variation>T</variation>
    <location>
        <position position="1526"/>
    </location>
</feature>
<feature type="sequence variant" id="VAR_057866" description="In LGMDR2." evidence="31">
    <original>G</original>
    <variation>D</variation>
    <location>
        <position position="1543"/>
    </location>
</feature>
<feature type="sequence variant" id="VAR_057867" description="In dbSNP:rs185596534." evidence="12">
    <original>R</original>
    <variation>H</variation>
    <location>
        <position position="1581"/>
    </location>
</feature>
<feature type="sequence variant" id="VAR_057868" description="In MMD1." evidence="16">
    <original>T</original>
    <variation>R</variation>
    <location>
        <position position="1662"/>
    </location>
</feature>
<feature type="sequence variant" id="VAR_057869" description="Found in patients with isolated hyperCKemia; dbSNP:rs753279446." evidence="21">
    <original>C</original>
    <variation>S</variation>
    <location>
        <position position="1678"/>
    </location>
</feature>
<feature type="sequence variant" id="VAR_057870" description="In MMD1." evidence="12">
    <original>G</original>
    <variation>E</variation>
    <location>
        <position position="1679"/>
    </location>
</feature>
<feature type="sequence variant" id="VAR_024870" description="In MMD1; dbSNP:rs779987458." evidence="20 31">
    <original>R</original>
    <variation>Q</variation>
    <location>
        <position position="1693"/>
    </location>
</feature>
<feature type="sequence variant" id="VAR_057871" description="In MMD1; dbSNP:rs863225021." evidence="21">
    <original>R</original>
    <variation>W</variation>
    <location>
        <position position="1693"/>
    </location>
</feature>
<feature type="sequence variant" id="VAR_057872" description="In LGMDR2; dbSNP:rs121908961." evidence="27">
    <original>E</original>
    <variation>G</variation>
    <location>
        <position position="1734"/>
    </location>
</feature>
<feature type="sequence variant" id="VAR_024871" description="In proximodistal myopathy." evidence="20 31">
    <original>E</original>
    <variation>V</variation>
    <location>
        <position position="1748"/>
    </location>
</feature>
<feature type="sequence variant" id="VAR_057873" description="In LGMDR2 and proximodistal myopathy; uncertain significance; dbSNP:rs746243052." evidence="25 31">
    <original>R</original>
    <variation>W</variation>
    <location>
        <position position="1768"/>
    </location>
</feature>
<feature type="sequence variant" id="VAR_057874" description="In MMD1; dbSNP:rs398123794." evidence="21 31">
    <original>D</original>
    <variation>N</variation>
    <location>
        <position position="1837"/>
    </location>
</feature>
<feature type="sequence variant" id="VAR_057875" description="In MMD1; dbSNP:rs1131692158." evidence="14">
    <original>G</original>
    <variation>D</variation>
    <location>
        <position position="1842"/>
    </location>
</feature>
<feature type="sequence variant" id="VAR_012310" description="In MMD1; dbSNP:rs199601326." evidence="36">
    <original>H</original>
    <variation>R</variation>
    <location>
        <position position="1857"/>
    </location>
</feature>
<feature type="sequence variant" id="VAR_057876" description="In MMD1; dbSNP:rs2095181926." evidence="14">
    <original>L</original>
    <variation>P</variation>
    <location>
        <position position="1922"/>
    </location>
</feature>
<feature type="sequence variant" id="VAR_057877" description="In MMD1." evidence="31">
    <location>
        <begin position="1938"/>
        <end position="1939"/>
    </location>
</feature>
<feature type="sequence variant" id="VAR_057878" description="In MMD1." evidence="21">
    <original>C</original>
    <variation>G</variation>
    <location>
        <position position="1942"/>
    </location>
</feature>
<feature type="sequence variant" id="VAR_057879" evidence="31">
    <original>G</original>
    <variation>S</variation>
    <location>
        <position position="1967"/>
    </location>
</feature>
<feature type="sequence variant" id="VAR_057880" description="In LGMDR2; dbSNP:rs1057521141." evidence="31">
    <original>P</original>
    <variation>S</variation>
    <location>
        <position position="1970"/>
    </location>
</feature>
<feature type="sequence variant" id="VAR_024872" description="In MMD1; dbSNP:rs115407852." evidence="9">
    <original>R</original>
    <variation>Q</variation>
    <location>
        <position position="2000"/>
    </location>
</feature>
<feature type="sequence variant" id="VAR_012311" description="In MMD1, LGMDR2 and proximodistal myopathy; dbSNP:rs121908955." evidence="21 25 31 36">
    <original>R</original>
    <variation>C</variation>
    <location>
        <position position="2042"/>
    </location>
</feature>
<feature type="sequence variant" id="VAR_057881" description="In MMD1; dbSNP:rs149732545." evidence="17">
    <original>P</original>
    <variation>L</variation>
    <location>
        <position position="2068"/>
    </location>
</feature>
<feature type="mutagenesis site" description="Fails to bind calcium." evidence="34">
    <original>D</original>
    <variation>A</variation>
    <location>
        <position position="16"/>
    </location>
</feature>
<feature type="mutagenesis site" description="Fails to bind calcium." evidence="34">
    <original>D</original>
    <variation>A</variation>
    <location>
        <position position="21"/>
    </location>
</feature>
<feature type="mutagenesis site" description="Fails to bind calcium." evidence="34">
    <original>D</original>
    <variation>A</variation>
    <location>
        <position position="71"/>
    </location>
</feature>
<feature type="mutagenesis site" description="Moderately increased calcium affinity." evidence="34">
    <original>R</original>
    <variation>D</variation>
    <location>
        <position position="79"/>
    </location>
</feature>
<feature type="mutagenesis site" description="Reduced calcium affinity." evidence="34">
    <original>F</original>
    <variation>A</variation>
    <location>
        <position position="80"/>
    </location>
</feature>
<feature type="strand" evidence="45">
    <location>
        <begin position="1"/>
        <end position="11"/>
    </location>
</feature>
<feature type="strand" evidence="46">
    <location>
        <begin position="15"/>
        <end position="18"/>
    </location>
</feature>
<feature type="strand" evidence="45">
    <location>
        <begin position="22"/>
        <end position="28"/>
    </location>
</feature>
<feature type="strand" evidence="45">
    <location>
        <begin position="31"/>
        <end position="34"/>
    </location>
</feature>
<feature type="strand" evidence="45">
    <location>
        <begin position="45"/>
        <end position="53"/>
    </location>
</feature>
<feature type="strand" evidence="47">
    <location>
        <begin position="55"/>
        <end position="57"/>
    </location>
</feature>
<feature type="strand" evidence="45">
    <location>
        <begin position="64"/>
        <end position="71"/>
    </location>
</feature>
<feature type="strand" evidence="45">
    <location>
        <begin position="74"/>
        <end position="76"/>
    </location>
</feature>
<feature type="strand" evidence="45">
    <location>
        <begin position="79"/>
        <end position="87"/>
    </location>
</feature>
<feature type="helix" evidence="45">
    <location>
        <begin position="89"/>
        <end position="92"/>
    </location>
</feature>
<feature type="strand" evidence="45">
    <location>
        <begin position="98"/>
        <end position="106"/>
    </location>
</feature>
<feature type="strand" evidence="47">
    <location>
        <begin position="107"/>
        <end position="109"/>
    </location>
</feature>
<feature type="strand" evidence="45">
    <location>
        <begin position="112"/>
        <end position="123"/>
    </location>
</feature>
<feature type="strand" evidence="43">
    <location>
        <begin position="946"/>
        <end position="958"/>
    </location>
</feature>
<feature type="strand" evidence="43">
    <location>
        <begin position="966"/>
        <end position="973"/>
    </location>
</feature>
<feature type="helix" evidence="43">
    <location>
        <begin position="983"/>
        <end position="985"/>
    </location>
</feature>
<feature type="strand" evidence="43">
    <location>
        <begin position="996"/>
        <end position="998"/>
    </location>
</feature>
<feature type="strand" evidence="44">
    <location>
        <begin position="1000"/>
        <end position="1002"/>
    </location>
</feature>
<feature type="strand" evidence="43">
    <location>
        <begin position="1011"/>
        <end position="1015"/>
    </location>
</feature>
<feature type="strand" evidence="43">
    <location>
        <begin position="1021"/>
        <end position="1023"/>
    </location>
</feature>
<feature type="strand" evidence="43">
    <location>
        <begin position="1028"/>
        <end position="1030"/>
    </location>
</feature>
<feature type="strand" evidence="43">
    <location>
        <begin position="1037"/>
        <end position="1049"/>
    </location>
</feature>
<feature type="modified residue" description="Phosphoserine" evidence="42">
    <location sequence="O75923-2">
        <position position="166"/>
    </location>
</feature>
<feature type="modified residue" description="Phosphothreonine" evidence="42">
    <location sequence="O75923-2">
        <position position="197"/>
    </location>
</feature>
<feature type="modified residue" description="Phosphoserine" evidence="42">
    <location sequence="O75923-5">
        <position position="166"/>
    </location>
</feature>
<feature type="modified residue" description="Phosphothreonine" evidence="42">
    <location sequence="O75923-5">
        <position position="197"/>
    </location>
</feature>
<feature type="modified residue" description="Phosphoserine" evidence="42">
    <location sequence="O75923-7">
        <position position="166"/>
    </location>
</feature>
<feature type="modified residue" description="Phosphothreonine" evidence="42">
    <location sequence="O75923-7">
        <position position="197"/>
    </location>
</feature>
<feature type="modified residue" description="Phosphoserine" evidence="42">
    <location sequence="O75923-8">
        <position position="167"/>
    </location>
</feature>
<feature type="modified residue" description="Phosphothreonine" evidence="42">
    <location sequence="O75923-8">
        <position position="198"/>
    </location>
</feature>
<feature type="modified residue" description="Phosphoserine" evidence="42">
    <location sequence="O75923-11">
        <position position="167"/>
    </location>
</feature>
<feature type="modified residue" description="Phosphothreonine" evidence="42">
    <location sequence="O75923-11">
        <position position="198"/>
    </location>
</feature>
<feature type="modified residue" description="Phosphoserine" evidence="42">
    <location sequence="O75923-13">
        <position position="167"/>
    </location>
</feature>
<feature type="modified residue" description="Phosphothreonine" evidence="42">
    <location sequence="O75923-13">
        <position position="198"/>
    </location>
</feature>
<evidence type="ECO:0000250" key="1"/>
<evidence type="ECO:0000255" key="2"/>
<evidence type="ECO:0000255" key="3">
    <source>
        <dbReference type="PROSITE-ProRule" id="PRU00041"/>
    </source>
</evidence>
<evidence type="ECO:0000256" key="4">
    <source>
        <dbReference type="SAM" id="MobiDB-lite"/>
    </source>
</evidence>
<evidence type="ECO:0000269" key="5">
    <source>
    </source>
</evidence>
<evidence type="ECO:0000269" key="6">
    <source>
    </source>
</evidence>
<evidence type="ECO:0000269" key="7">
    <source>
    </source>
</evidence>
<evidence type="ECO:0000269" key="8">
    <source>
    </source>
</evidence>
<evidence type="ECO:0000269" key="9">
    <source>
    </source>
</evidence>
<evidence type="ECO:0000269" key="10">
    <source>
    </source>
</evidence>
<evidence type="ECO:0000269" key="11">
    <source>
    </source>
</evidence>
<evidence type="ECO:0000269" key="12">
    <source>
    </source>
</evidence>
<evidence type="ECO:0000269" key="13">
    <source>
    </source>
</evidence>
<evidence type="ECO:0000269" key="14">
    <source>
    </source>
</evidence>
<evidence type="ECO:0000269" key="15">
    <source>
    </source>
</evidence>
<evidence type="ECO:0000269" key="16">
    <source>
    </source>
</evidence>
<evidence type="ECO:0000269" key="17">
    <source>
    </source>
</evidence>
<evidence type="ECO:0000269" key="18">
    <source>
    </source>
</evidence>
<evidence type="ECO:0000269" key="19">
    <source>
    </source>
</evidence>
<evidence type="ECO:0000269" key="20">
    <source>
    </source>
</evidence>
<evidence type="ECO:0000269" key="21">
    <source>
    </source>
</evidence>
<evidence type="ECO:0000269" key="22">
    <source>
    </source>
</evidence>
<evidence type="ECO:0000269" key="23">
    <source>
    </source>
</evidence>
<evidence type="ECO:0000269" key="24">
    <source>
    </source>
</evidence>
<evidence type="ECO:0000269" key="25">
    <source>
    </source>
</evidence>
<evidence type="ECO:0000269" key="26">
    <source>
    </source>
</evidence>
<evidence type="ECO:0000269" key="27">
    <source>
    </source>
</evidence>
<evidence type="ECO:0000269" key="28">
    <source>
    </source>
</evidence>
<evidence type="ECO:0000269" key="29">
    <source>
    </source>
</evidence>
<evidence type="ECO:0000269" key="30">
    <source>
    </source>
</evidence>
<evidence type="ECO:0000269" key="31">
    <source>
    </source>
</evidence>
<evidence type="ECO:0000269" key="32">
    <source>
    </source>
</evidence>
<evidence type="ECO:0000269" key="33">
    <source>
    </source>
</evidence>
<evidence type="ECO:0000269" key="34">
    <source>
    </source>
</evidence>
<evidence type="ECO:0000269" key="35">
    <source>
    </source>
</evidence>
<evidence type="ECO:0000269" key="36">
    <source>
    </source>
</evidence>
<evidence type="ECO:0000269" key="37">
    <source ref="28"/>
</evidence>
<evidence type="ECO:0000303" key="38">
    <source>
    </source>
</evidence>
<evidence type="ECO:0000303" key="39">
    <source>
    </source>
</evidence>
<evidence type="ECO:0000303" key="40">
    <source ref="7"/>
</evidence>
<evidence type="ECO:0000305" key="41"/>
<evidence type="ECO:0007744" key="42">
    <source>
    </source>
</evidence>
<evidence type="ECO:0007829" key="43">
    <source>
        <dbReference type="PDB" id="4CAH"/>
    </source>
</evidence>
<evidence type="ECO:0007829" key="44">
    <source>
        <dbReference type="PDB" id="4CAI"/>
    </source>
</evidence>
<evidence type="ECO:0007829" key="45">
    <source>
        <dbReference type="PDB" id="4IQH"/>
    </source>
</evidence>
<evidence type="ECO:0007829" key="46">
    <source>
        <dbReference type="PDB" id="7JOF"/>
    </source>
</evidence>
<evidence type="ECO:0007829" key="47">
    <source>
        <dbReference type="PDB" id="7K6B"/>
    </source>
</evidence>
<proteinExistence type="evidence at protein level"/>
<accession>O75923</accession>
<accession>A0FK00</accession>
<accession>B1PZ70</accession>
<accession>B1PZ71</accession>
<accession>B1PZ72</accession>
<accession>B1PZ73</accession>
<accession>B1PZ74</accession>
<accession>B1PZ75</accession>
<accession>B1PZ76</accession>
<accession>B1PZ77</accession>
<accession>B1PZ78</accession>
<accession>B1PZ79</accession>
<accession>B1PZ80</accession>
<accession>B1PZ81</accession>
<accession>B3KQB9</accession>
<accession>O75696</accession>
<accession>Q09EX5</accession>
<accession>Q0H395</accession>
<accession>Q53QY3</accession>
<accession>Q53TD2</accession>
<accession>Q8TEL8</accession>
<accession>Q9UEN7</accession>
<gene>
    <name type="primary">DYSF</name>
    <name type="synonym">FER1L1</name>
</gene>
<comment type="function">
    <text evidence="1">Key calcium ion sensor involved in the Ca(2+)-triggered synaptic vesicle-plasma membrane fusion. Plays a role in the sarcolemma repair mechanism of both skeletal muscle and cardiomyocytes that permits rapid resealing of membranes disrupted by mechanical stress (By similarity).</text>
</comment>
<comment type="cofactor">
    <cofactor evidence="3">
        <name>Ca(2+)</name>
        <dbReference type="ChEBI" id="CHEBI:29108"/>
    </cofactor>
</comment>
<comment type="subunit">
    <text evidence="1 10 19 26 33 35">Interacts with CACNA1S. Interacts with ANXA1; the interaction is Ca(2+)- and injury state-dependent. Interacts with ANXA2; the interaction is Ca(2+)- and injury state-dependent. Interacts with CACNA1S and PARVB. Interacts with TRIM72/MG53; interaction is required for transport to sites of cell injury during repair patch formation (By similarity). Interacts with RIPOR2; this interaction occurs during early myogenic differentiation (PubMed:24687993). Interacts with CAV3 and PARVB. Interacts with AHNAK; the interaction is direct and Ca(2+)-independent. Interacts with AHNAK2; the interaction is direct and Ca(2+)-independent.</text>
</comment>
<comment type="interaction">
    <interactant intactId="EBI-2799016">
        <id>O75923</id>
    </interactant>
    <interactant intactId="EBI-5652924">
        <id>Q00872</id>
        <label>MYBPC1</label>
    </interactant>
    <organismsDiffer>false</organismsDiffer>
    <experiments>4</experiments>
</comment>
<comment type="interaction">
    <interactant intactId="EBI-2799016">
        <id>O75923</id>
    </interactant>
    <interactant intactId="EBI-5353249">
        <id>P52179</id>
        <label>MYOM1</label>
    </interactant>
    <organismsDiffer>false</organismsDiffer>
    <experiments>3</experiments>
</comment>
<comment type="interaction">
    <interactant intactId="EBI-2799016">
        <id>O75923</id>
    </interactant>
    <interactant intactId="EBI-5357134">
        <id>P54296</id>
        <label>MYOM2</label>
    </interactant>
    <organismsDiffer>false</organismsDiffer>
    <experiments>3</experiments>
</comment>
<comment type="interaction">
    <interactant intactId="EBI-2799016">
        <id>O75923</id>
    </interactant>
    <interactant intactId="EBI-55727352">
        <id>P20929-1</id>
        <label>NEB</label>
    </interactant>
    <organismsDiffer>false</organismsDiffer>
    <experiments>4</experiments>
</comment>
<comment type="interaction">
    <interactant intactId="EBI-2799016">
        <id>O75923</id>
    </interactant>
    <interactant intactId="EBI-5357343">
        <id>Q13326</id>
        <label>SGCG</label>
    </interactant>
    <organismsDiffer>false</organismsDiffer>
    <experiments>3</experiments>
</comment>
<comment type="interaction">
    <interactant intactId="EBI-2799016">
        <id>O75923</id>
    </interactant>
    <interactant intactId="EBI-681210">
        <id>Q8WZ42</id>
        <label>TTN</label>
    </interactant>
    <organismsDiffer>false</organismsDiffer>
    <experiments>17</experiments>
</comment>
<comment type="interaction">
    <interactant intactId="EBI-19949386">
        <id>O75923-13</id>
    </interactant>
    <interactant intactId="EBI-12188331">
        <id>P60201-2</id>
        <label>PLP1</label>
    </interactant>
    <organismsDiffer>false</organismsDiffer>
    <experiments>3</experiments>
</comment>
<comment type="subcellular location">
    <subcellularLocation>
        <location>Cell membrane</location>
        <location>Sarcolemma</location>
        <topology>Single-pass type II membrane protein</topology>
    </subcellularLocation>
    <subcellularLocation>
        <location evidence="1">Cytoplasmic vesicle membrane</location>
        <topology evidence="1">Single-pass type II membrane protein</topology>
    </subcellularLocation>
    <subcellularLocation>
        <location>Cell membrane</location>
    </subcellularLocation>
    <text evidence="1">Colocalizes, during muscle differentiation, with BIN1 in the T-tubule system of myotubules and at the site of contact between two myotubes or a myoblast and a myotube. Wounding of myotubes led to its focal enrichment to the site of injury and to its relocalization in a Ca(2+)-dependent manner toward the plasma membrane. Colocalizes with AHNAK, AHNAK2 and PARVB at the sarcolemma of skeletal muscle. Detected on the apical plasma membrane of the syncytiotrophoblast. Reaches the plasmma membrane through a caveolin-independent mechanism. Retained by caveolin at the plasmma membrane (By similarity). Colocalizes, during muscle differentiation, with CACNA1S in the T-tubule system of myotubules (By similarity). Accumulates and colocalizes with fusion vesicles at the sarcolemma disruption sites (By similarity).</text>
</comment>
<comment type="alternative products">
    <event type="alternative promoter"/>
    <event type="alternative splicing"/>
    <isoform>
        <id>O75923-1</id>
        <name>1</name>
        <sequence type="displayed"/>
    </isoform>
    <isoform>
        <id>O75923-2</id>
        <name>2</name>
        <sequence type="described" ref="VSP_035925"/>
    </isoform>
    <isoform>
        <id>O75923-3</id>
        <name>3</name>
        <sequence type="described" ref="VSP_035926"/>
    </isoform>
    <isoform>
        <id>O75923-4</id>
        <name>4</name>
        <sequence type="described" ref="VSP_035927"/>
    </isoform>
    <isoform>
        <id>O75923-5</id>
        <name>5</name>
        <sequence type="described" ref="VSP_035925 VSP_035926"/>
    </isoform>
    <isoform>
        <id>O75923-6</id>
        <name>6</name>
        <sequence type="described" ref="VSP_035926 VSP_035927"/>
    </isoform>
    <isoform>
        <id>O75923-7</id>
        <name>7</name>
        <sequence type="described" ref="VSP_035925 VSP_035926 VSP_035927"/>
    </isoform>
    <isoform>
        <id>O75923-8</id>
        <name>8</name>
        <sequence type="described" ref="VSP_035924 VSP_035925"/>
    </isoform>
    <isoform>
        <id>O75923-9</id>
        <name>9</name>
        <sequence type="described" ref="VSP_035924 VSP_035926"/>
    </isoform>
    <isoform>
        <id>O75923-10</id>
        <name>10</name>
        <sequence type="described" ref="VSP_035924 VSP_035927"/>
    </isoform>
    <isoform>
        <id>O75923-11</id>
        <name>11</name>
        <sequence type="described" ref="VSP_035924 VSP_035925 VSP_035926"/>
    </isoform>
    <isoform>
        <id>O75923-12</id>
        <name>12</name>
        <sequence type="described" ref="VSP_035924 VSP_035926 VSP_035927"/>
    </isoform>
    <isoform>
        <id>O75923-13</id>
        <name>13</name>
        <sequence type="described" ref="VSP_035924 VSP_035925 VSP_035926 VSP_035927"/>
    </isoform>
    <isoform>
        <id>O75923-14</id>
        <name>14</name>
        <name>Dysferlin_v1</name>
        <name>DYSF_v1</name>
        <sequence type="described" ref="VSP_035924"/>
    </isoform>
    <isoform>
        <id>O75923-15</id>
        <name>15</name>
        <sequence type="described" ref="VSP_035926 VSP_035928 VSP_035929"/>
    </isoform>
    <text>Approximately 23% of the transcripts in skeletal muscle incorporate exon 1a from an alternative promoter and missing the calcium-binding sites of domain C2 1.</text>
</comment>
<comment type="tissue specificity">
    <text evidence="5 10 11 15 23 26 28 29 33">Expressed in skeletal muscle, myoblast, myotube and in the syncytiotrophoblast (STB) of the placenta (at protein level). Ubiquitous. Highly expressed in skeletal muscle. Also found in heart, brain, spleen, intestine, placenta and at lower levels in liver, lung, kidney and pancreas.</text>
</comment>
<comment type="developmental stage">
    <text evidence="5">Expression in limb tissue from 5-6 weeks embryos; persists throughout development.</text>
</comment>
<comment type="domain">
    <text evidence="33 34">All seven C2 domains associate with lipid membranes in a calcium-dependent manner. Domains C2 1 and 3 have the highest affinity for calcium, the C2 domain 1 seems to be largely unstructured in the absence of bound ligands. The C2 domain 1 from isoform 14 does not bind calcium in the absence of bound phospholipid (PubMed:24239457, PubMed:24461013).</text>
</comment>
<comment type="disease" evidence="6 7 13 16 20 21 22 25 26 27 30 31 32 36">
    <disease id="DI-00659">
        <name>Muscular dystrophy, limb-girdle, autosomal recessive 2</name>
        <acronym>LGMDR2</acronym>
        <description>An autosomal recessive degenerative myopathy characterized by weakness and atrophy starting in the proximal pelvifemoral muscles, with onset in the late teens or later, massive elevation of serum creatine kinase levels and slow progression. Scapular muscle involvement is minor and not present at onset. Upper limb girdle involvement follows some years after the onset in lower limbs.</description>
        <dbReference type="MIM" id="253601"/>
    </disease>
    <text>The disease is caused by variants affecting the gene represented in this entry.</text>
</comment>
<comment type="disease" evidence="6 7 9 11 12 14 16 17 18 20 21 27 30 31 36 37">
    <disease id="DI-01987">
        <name>Miyoshi muscular dystrophy 1</name>
        <acronym>MMD1</acronym>
        <description>A late-onset muscular dystrophy involving the distal lower limb musculature. It is characterized by weakness that initially affects the gastrocnemius muscle during early adulthood.</description>
        <dbReference type="MIM" id="254130"/>
    </disease>
    <text>The disease is caused by variants affecting the gene represented in this entry.</text>
</comment>
<comment type="disease" evidence="8">
    <disease id="DI-01494">
        <name>Distal myopathy with anterior tibial onset</name>
        <acronym>DMAT</acronym>
        <description>Onset of the disorder is between 14 and 28 years of age and the anterior tibial muscles are the first muscle group to be involved. Inheritance is autosomal recessive.</description>
        <dbReference type="MIM" id="606768"/>
    </disease>
    <text>The disease is caused by variants affecting the gene represented in this entry.</text>
</comment>
<comment type="miscellaneous">
    <molecule>Isoform 14</molecule>
    <text evidence="41">Produced by alternative promoter usage.</text>
</comment>
<comment type="similarity">
    <text evidence="41">Belongs to the ferlin family.</text>
</comment>
<comment type="sequence caution" evidence="41">
    <conflict type="erroneous initiation">
        <sequence resource="EMBL-CDS" id="BAG51981"/>
    </conflict>
</comment>
<comment type="sequence caution" evidence="41">
    <conflict type="erroneous initiation">
        <sequence resource="EMBL-CDS" id="CAA07603"/>
    </conflict>
    <text>Extended N-terminus.</text>
</comment>
<comment type="sequence caution" evidence="41">
    <conflict type="frameshift">
        <sequence resource="EMBL-CDS" id="CAA07603"/>
    </conflict>
</comment>
<comment type="online information" name="Leiden Muscular Dystrophy pages">
    <link uri="https://www.dmd.nl/dysf_home.html"/>
    <text>Dysferlin</text>
</comment>
<comment type="online information" name="Wikipedia">
    <link uri="https://en.wikipedia.org/wiki/Dysferlin"/>
    <text>Dysferlin entry</text>
</comment>
<organism>
    <name type="scientific">Homo sapiens</name>
    <name type="common">Human</name>
    <dbReference type="NCBI Taxonomy" id="9606"/>
    <lineage>
        <taxon>Eukaryota</taxon>
        <taxon>Metazoa</taxon>
        <taxon>Chordata</taxon>
        <taxon>Craniata</taxon>
        <taxon>Vertebrata</taxon>
        <taxon>Euteleostomi</taxon>
        <taxon>Mammalia</taxon>
        <taxon>Eutheria</taxon>
        <taxon>Euarchontoglires</taxon>
        <taxon>Primates</taxon>
        <taxon>Haplorrhini</taxon>
        <taxon>Catarrhini</taxon>
        <taxon>Hominidae</taxon>
        <taxon>Homo</taxon>
    </lineage>
</organism>
<protein>
    <recommendedName>
        <fullName>Dysferlin</fullName>
    </recommendedName>
    <alternativeName>
        <fullName>Dystrophy-associated fer-1-like protein</fullName>
    </alternativeName>
    <alternativeName>
        <fullName>Fer-1-like protein 1</fullName>
    </alternativeName>
</protein>
<name>DYSF_HUMAN</name>
<dbReference type="EMBL" id="AF075575">
    <property type="protein sequence ID" value="AAC63519.1"/>
    <property type="molecule type" value="mRNA"/>
</dbReference>
<dbReference type="EMBL" id="DQ267935">
    <property type="protein sequence ID" value="ABB89736.1"/>
    <property type="molecule type" value="mRNA"/>
</dbReference>
<dbReference type="EMBL" id="DQ976379">
    <property type="protein sequence ID" value="ABI75150.1"/>
    <property type="molecule type" value="Genomic_DNA"/>
</dbReference>
<dbReference type="EMBL" id="EF015906">
    <property type="protein sequence ID" value="ABK20181.1"/>
    <property type="molecule type" value="Genomic_DNA"/>
</dbReference>
<dbReference type="EMBL" id="EU515155">
    <property type="protein sequence ID" value="ACB12752.1"/>
    <property type="molecule type" value="mRNA"/>
</dbReference>
<dbReference type="EMBL" id="EU515156">
    <property type="protein sequence ID" value="ACB12753.1"/>
    <property type="molecule type" value="mRNA"/>
</dbReference>
<dbReference type="EMBL" id="EU515157">
    <property type="protein sequence ID" value="ACB12754.1"/>
    <property type="molecule type" value="mRNA"/>
</dbReference>
<dbReference type="EMBL" id="EU515158">
    <property type="protein sequence ID" value="ACB12755.1"/>
    <property type="molecule type" value="mRNA"/>
</dbReference>
<dbReference type="EMBL" id="EU515159">
    <property type="protein sequence ID" value="ACB12756.1"/>
    <property type="molecule type" value="mRNA"/>
</dbReference>
<dbReference type="EMBL" id="EU515160">
    <property type="protein sequence ID" value="ACB12757.1"/>
    <property type="molecule type" value="mRNA"/>
</dbReference>
<dbReference type="EMBL" id="EU515161">
    <property type="protein sequence ID" value="ACB12758.1"/>
    <property type="molecule type" value="mRNA"/>
</dbReference>
<dbReference type="EMBL" id="EU515162">
    <property type="protein sequence ID" value="ACB12759.1"/>
    <property type="molecule type" value="mRNA"/>
</dbReference>
<dbReference type="EMBL" id="EU515163">
    <property type="protein sequence ID" value="ACB12760.1"/>
    <property type="molecule type" value="mRNA"/>
</dbReference>
<dbReference type="EMBL" id="EU515164">
    <property type="protein sequence ID" value="ACB12761.1"/>
    <property type="molecule type" value="mRNA"/>
</dbReference>
<dbReference type="EMBL" id="EU515165">
    <property type="protein sequence ID" value="ACB12762.1"/>
    <property type="molecule type" value="mRNA"/>
</dbReference>
<dbReference type="EMBL" id="EU515166">
    <property type="protein sequence ID" value="ACB12763.1"/>
    <property type="molecule type" value="mRNA"/>
</dbReference>
<dbReference type="EMBL" id="AC010147">
    <property type="protein sequence ID" value="AAY14954.1"/>
    <property type="molecule type" value="Genomic_DNA"/>
</dbReference>
<dbReference type="EMBL" id="AC104084">
    <property type="protein sequence ID" value="AAY24199.1"/>
    <property type="molecule type" value="Genomic_DNA"/>
</dbReference>
<dbReference type="EMBL" id="CH471053">
    <property type="protein sequence ID" value="EAW99763.1"/>
    <property type="molecule type" value="Genomic_DNA"/>
</dbReference>
<dbReference type="EMBL" id="AJ007670">
    <property type="protein sequence ID" value="CAA07603.1"/>
    <property type="status" value="ALT_SEQ"/>
    <property type="molecule type" value="mRNA"/>
</dbReference>
<dbReference type="EMBL" id="AJ007973">
    <property type="protein sequence ID" value="CAA07800.1"/>
    <property type="molecule type" value="Genomic_DNA"/>
</dbReference>
<dbReference type="EMBL" id="AK074104">
    <property type="protein sequence ID" value="BAB84930.1"/>
    <property type="molecule type" value="mRNA"/>
</dbReference>
<dbReference type="EMBL" id="AK074649">
    <property type="protein sequence ID" value="BAG51981.1"/>
    <property type="status" value="ALT_INIT"/>
    <property type="molecule type" value="mRNA"/>
</dbReference>
<dbReference type="CCDS" id="CCDS1918.1">
    <molecule id="O75923-1"/>
</dbReference>
<dbReference type="CCDS" id="CCDS46323.1">
    <molecule id="O75923-2"/>
</dbReference>
<dbReference type="CCDS" id="CCDS46324.1">
    <molecule id="O75923-7"/>
</dbReference>
<dbReference type="CCDS" id="CCDS46325.1">
    <molecule id="O75923-5"/>
</dbReference>
<dbReference type="CCDS" id="CCDS46326.1">
    <molecule id="O75923-4"/>
</dbReference>
<dbReference type="CCDS" id="CCDS46327.1">
    <molecule id="O75923-8"/>
</dbReference>
<dbReference type="CCDS" id="CCDS46328.1">
    <molecule id="O75923-13"/>
</dbReference>
<dbReference type="CCDS" id="CCDS46329.1">
    <molecule id="O75923-11"/>
</dbReference>
<dbReference type="CCDS" id="CCDS46330.1">
    <molecule id="O75923-10"/>
</dbReference>
<dbReference type="CCDS" id="CCDS46331.1">
    <molecule id="O75923-14"/>
</dbReference>
<dbReference type="CCDS" id="CCDS46332.1">
    <molecule id="O75923-12"/>
</dbReference>
<dbReference type="RefSeq" id="NP_001123927.1">
    <molecule id="O75923-14"/>
    <property type="nucleotide sequence ID" value="NM_001130455.2"/>
</dbReference>
<dbReference type="RefSeq" id="NP_001124448.1">
    <molecule id="O75923-3"/>
    <property type="nucleotide sequence ID" value="NM_001130976.2"/>
</dbReference>
<dbReference type="RefSeq" id="NP_001124449.1">
    <molecule id="O75923-6"/>
    <property type="nucleotide sequence ID" value="NM_001130977.2"/>
</dbReference>
<dbReference type="RefSeq" id="NP_001124450.1">
    <molecule id="O75923-4"/>
    <property type="nucleotide sequence ID" value="NM_001130978.2"/>
</dbReference>
<dbReference type="RefSeq" id="NP_001124451.1">
    <molecule id="O75923-2"/>
    <property type="nucleotide sequence ID" value="NM_001130979.2"/>
</dbReference>
<dbReference type="RefSeq" id="NP_001124452.1">
    <molecule id="O75923-5"/>
    <property type="nucleotide sequence ID" value="NM_001130980.2"/>
</dbReference>
<dbReference type="RefSeq" id="NP_001124453.1">
    <molecule id="O75923-7"/>
    <property type="nucleotide sequence ID" value="NM_001130981.2"/>
</dbReference>
<dbReference type="RefSeq" id="NP_001124454.1">
    <molecule id="O75923-8"/>
    <property type="nucleotide sequence ID" value="NM_001130982.2"/>
</dbReference>
<dbReference type="RefSeq" id="NP_001124455.1">
    <molecule id="O75923-10"/>
    <property type="nucleotide sequence ID" value="NM_001130983.2"/>
</dbReference>
<dbReference type="RefSeq" id="NP_001124456.1">
    <molecule id="O75923-12"/>
    <property type="nucleotide sequence ID" value="NM_001130984.2"/>
</dbReference>
<dbReference type="RefSeq" id="NP_001124457.1">
    <molecule id="O75923-11"/>
    <property type="nucleotide sequence ID" value="NM_001130985.2"/>
</dbReference>
<dbReference type="RefSeq" id="NP_001124458.1">
    <molecule id="O75923-9"/>
    <property type="nucleotide sequence ID" value="NM_001130986.2"/>
</dbReference>
<dbReference type="RefSeq" id="NP_001124459.1">
    <molecule id="O75923-13"/>
    <property type="nucleotide sequence ID" value="NM_001130987.2"/>
</dbReference>
<dbReference type="RefSeq" id="NP_003485.1">
    <molecule id="O75923-1"/>
    <property type="nucleotide sequence ID" value="NM_003494.4"/>
</dbReference>
<dbReference type="PDB" id="4CAH">
    <property type="method" value="X-ray"/>
    <property type="resolution" value="1.90 A"/>
    <property type="chains" value="B=942-1052"/>
</dbReference>
<dbReference type="PDB" id="4CAI">
    <property type="method" value="X-ray"/>
    <property type="resolution" value="2.20 A"/>
    <property type="chains" value="A/B/C=942-1052"/>
</dbReference>
<dbReference type="PDB" id="4IHB">
    <property type="method" value="X-ray"/>
    <property type="resolution" value="2.04 A"/>
    <property type="chains" value="A/B/C/D/E/F=1-124"/>
</dbReference>
<dbReference type="PDB" id="4IQH">
    <property type="method" value="X-ray"/>
    <property type="resolution" value="1.76 A"/>
    <property type="chains" value="A/B/C=30-124"/>
</dbReference>
<dbReference type="PDB" id="7JOF">
    <property type="method" value="X-ray"/>
    <property type="resolution" value="2.00 A"/>
    <property type="chains" value="A/B/C/D=1-130"/>
</dbReference>
<dbReference type="PDB" id="7K6B">
    <property type="method" value="NMR"/>
    <property type="chains" value="A=1-130"/>
</dbReference>
<dbReference type="PDB" id="7KRB">
    <property type="method" value="NMR"/>
    <property type="chains" value="A=1-130"/>
</dbReference>
<dbReference type="PDB" id="9B8K">
    <property type="method" value="EM"/>
    <property type="resolution" value="2.96 A"/>
    <property type="chains" value="A=1-2080"/>
</dbReference>
<dbReference type="PDB" id="9B8L">
    <property type="method" value="EM"/>
    <property type="resolution" value="4.65 A"/>
    <property type="chains" value="A/B=1-2080"/>
</dbReference>
<dbReference type="PDBsum" id="4CAH"/>
<dbReference type="PDBsum" id="4CAI"/>
<dbReference type="PDBsum" id="4IHB"/>
<dbReference type="PDBsum" id="4IQH"/>
<dbReference type="PDBsum" id="7JOF"/>
<dbReference type="PDBsum" id="7K6B"/>
<dbReference type="PDBsum" id="7KRB"/>
<dbReference type="PDBsum" id="9B8K"/>
<dbReference type="PDBsum" id="9B8L"/>
<dbReference type="EMDB" id="EMD-44348"/>
<dbReference type="EMDB" id="EMD-44349"/>
<dbReference type="SMR" id="O75923"/>
<dbReference type="BioGRID" id="113896">
    <property type="interactions" value="63"/>
</dbReference>
<dbReference type="CORUM" id="O75923"/>
<dbReference type="FunCoup" id="O75923">
    <property type="interactions" value="309"/>
</dbReference>
<dbReference type="IntAct" id="O75923">
    <property type="interactions" value="54"/>
</dbReference>
<dbReference type="STRING" id="9606.ENSP00000386881"/>
<dbReference type="TCDB" id="1.F.1.2.1">
    <property type="family name" value="the synaptosomal vesicle fusion pore (svf-pore) family"/>
</dbReference>
<dbReference type="GlyGen" id="O75923">
    <property type="glycosylation" value="1 site, 1 O-linked glycan (1 site)"/>
</dbReference>
<dbReference type="iPTMnet" id="O75923"/>
<dbReference type="PhosphoSitePlus" id="O75923"/>
<dbReference type="SwissPalm" id="O75923"/>
<dbReference type="BioMuta" id="DYSF"/>
<dbReference type="jPOST" id="O75923"/>
<dbReference type="MassIVE" id="O75923"/>
<dbReference type="PaxDb" id="9606-ENSP00000386881"/>
<dbReference type="PeptideAtlas" id="O75923"/>
<dbReference type="ProteomicsDB" id="50278">
    <molecule id="O75923-1"/>
</dbReference>
<dbReference type="ProteomicsDB" id="50279">
    <molecule id="O75923-10"/>
</dbReference>
<dbReference type="ProteomicsDB" id="50280">
    <molecule id="O75923-11"/>
</dbReference>
<dbReference type="ProteomicsDB" id="50281">
    <molecule id="O75923-12"/>
</dbReference>
<dbReference type="ProteomicsDB" id="50282">
    <molecule id="O75923-13"/>
</dbReference>
<dbReference type="ProteomicsDB" id="50283">
    <molecule id="O75923-14"/>
</dbReference>
<dbReference type="ProteomicsDB" id="50284">
    <molecule id="O75923-15"/>
</dbReference>
<dbReference type="ProteomicsDB" id="50285">
    <molecule id="O75923-2"/>
</dbReference>
<dbReference type="ProteomicsDB" id="50286">
    <molecule id="O75923-3"/>
</dbReference>
<dbReference type="ProteomicsDB" id="50287">
    <molecule id="O75923-4"/>
</dbReference>
<dbReference type="ProteomicsDB" id="50288">
    <molecule id="O75923-5"/>
</dbReference>
<dbReference type="ProteomicsDB" id="50289">
    <molecule id="O75923-6"/>
</dbReference>
<dbReference type="ProteomicsDB" id="50290">
    <molecule id="O75923-7"/>
</dbReference>
<dbReference type="ProteomicsDB" id="50291">
    <molecule id="O75923-8"/>
</dbReference>
<dbReference type="ProteomicsDB" id="50292">
    <molecule id="O75923-9"/>
</dbReference>
<dbReference type="Pumba" id="O75923"/>
<dbReference type="Antibodypedia" id="2461">
    <property type="antibodies" value="299 antibodies from 35 providers"/>
</dbReference>
<dbReference type="DNASU" id="8291"/>
<dbReference type="Ensembl" id="ENST00000258104.8">
    <molecule id="O75923-1"/>
    <property type="protein sequence ID" value="ENSP00000258104.3"/>
    <property type="gene ID" value="ENSG00000135636.16"/>
</dbReference>
<dbReference type="Ensembl" id="ENST00000394120.6">
    <molecule id="O75923-14"/>
    <property type="protein sequence ID" value="ENSP00000377678.2"/>
    <property type="gene ID" value="ENSG00000135636.16"/>
</dbReference>
<dbReference type="Ensembl" id="ENST00000409366.5">
    <molecule id="O75923-10"/>
    <property type="protein sequence ID" value="ENSP00000386512.1"/>
    <property type="gene ID" value="ENSG00000135636.16"/>
</dbReference>
<dbReference type="Ensembl" id="ENST00000409582.7">
    <molecule id="O75923-7"/>
    <property type="protein sequence ID" value="ENSP00000386547.3"/>
    <property type="gene ID" value="ENSG00000135636.16"/>
</dbReference>
<dbReference type="Ensembl" id="ENST00000409651.5">
    <molecule id="O75923-8"/>
    <property type="protein sequence ID" value="ENSP00000386683.1"/>
    <property type="gene ID" value="ENSG00000135636.16"/>
</dbReference>
<dbReference type="Ensembl" id="ENST00000409744.5">
    <molecule id="O75923-12"/>
    <property type="protein sequence ID" value="ENSP00000386285.1"/>
    <property type="gene ID" value="ENSG00000135636.16"/>
</dbReference>
<dbReference type="Ensembl" id="ENST00000409762.5">
    <molecule id="O75923-5"/>
    <property type="protein sequence ID" value="ENSP00000387137.1"/>
    <property type="gene ID" value="ENSG00000135636.16"/>
</dbReference>
<dbReference type="Ensembl" id="ENST00000410020.8">
    <molecule id="O75923-13"/>
    <property type="protein sequence ID" value="ENSP00000386881.3"/>
    <property type="gene ID" value="ENSG00000135636.16"/>
</dbReference>
<dbReference type="Ensembl" id="ENST00000410041.1">
    <molecule id="O75923-11"/>
    <property type="protein sequence ID" value="ENSP00000386617.1"/>
    <property type="gene ID" value="ENSG00000135636.16"/>
</dbReference>
<dbReference type="Ensembl" id="ENST00000413539.6">
    <molecule id="O75923-2"/>
    <property type="protein sequence ID" value="ENSP00000407046.2"/>
    <property type="gene ID" value="ENSG00000135636.16"/>
</dbReference>
<dbReference type="Ensembl" id="ENST00000429174.6">
    <molecule id="O75923-4"/>
    <property type="protein sequence ID" value="ENSP00000398305.2"/>
    <property type="gene ID" value="ENSG00000135636.16"/>
</dbReference>
<dbReference type="GeneID" id="8291"/>
<dbReference type="KEGG" id="hsa:8291"/>
<dbReference type="MANE-Select" id="ENST00000410020.8">
    <molecule id="O75923-13"/>
    <property type="protein sequence ID" value="ENSP00000386881.3"/>
    <property type="RefSeq nucleotide sequence ID" value="NM_001130987.2"/>
    <property type="RefSeq protein sequence ID" value="NP_001124459.1"/>
</dbReference>
<dbReference type="UCSC" id="uc002sie.4">
    <molecule id="O75923-1"/>
    <property type="organism name" value="human"/>
</dbReference>
<dbReference type="AGR" id="HGNC:3097"/>
<dbReference type="CTD" id="8291"/>
<dbReference type="DisGeNET" id="8291"/>
<dbReference type="GeneCards" id="DYSF"/>
<dbReference type="GeneReviews" id="DYSF"/>
<dbReference type="HGNC" id="HGNC:3097">
    <property type="gene designation" value="DYSF"/>
</dbReference>
<dbReference type="HPA" id="ENSG00000135636">
    <property type="expression patterns" value="Tissue enhanced (bone marrow, skeletal muscle)"/>
</dbReference>
<dbReference type="MalaCards" id="DYSF"/>
<dbReference type="MIM" id="253601">
    <property type="type" value="phenotype"/>
</dbReference>
<dbReference type="MIM" id="254130">
    <property type="type" value="phenotype"/>
</dbReference>
<dbReference type="MIM" id="603009">
    <property type="type" value="gene"/>
</dbReference>
<dbReference type="MIM" id="606768">
    <property type="type" value="phenotype"/>
</dbReference>
<dbReference type="neXtProt" id="NX_O75923"/>
<dbReference type="OpenTargets" id="ENSG00000135636"/>
<dbReference type="Orphanet" id="199329">
    <property type="disease" value="Congenital myopathy, Paradas type"/>
</dbReference>
<dbReference type="Orphanet" id="178400">
    <property type="disease" value="Distal myopathy with anterior tibial onset"/>
</dbReference>
<dbReference type="Orphanet" id="268">
    <property type="disease" value="Dysferlin-related limb-girdle muscular dystrophy R2"/>
</dbReference>
<dbReference type="Orphanet" id="45448">
    <property type="disease" value="Miyoshi myopathy"/>
</dbReference>
<dbReference type="PharmGKB" id="PA27554"/>
<dbReference type="VEuPathDB" id="HostDB:ENSG00000135636"/>
<dbReference type="eggNOG" id="KOG1326">
    <property type="taxonomic scope" value="Eukaryota"/>
</dbReference>
<dbReference type="GeneTree" id="ENSGT00940000156187"/>
<dbReference type="HOGENOM" id="CLU_001183_2_1_1"/>
<dbReference type="InParanoid" id="O75923"/>
<dbReference type="OMA" id="AYCSVTY"/>
<dbReference type="OrthoDB" id="10059618at2759"/>
<dbReference type="PAN-GO" id="O75923">
    <property type="GO annotations" value="10 GO annotations based on evolutionary models"/>
</dbReference>
<dbReference type="PhylomeDB" id="O75923"/>
<dbReference type="TreeFam" id="TF316871"/>
<dbReference type="PathwayCommons" id="O75923"/>
<dbReference type="Reactome" id="R-HSA-445355">
    <property type="pathway name" value="Smooth Muscle Contraction"/>
</dbReference>
<dbReference type="SignaLink" id="O75923"/>
<dbReference type="SIGNOR" id="O75923"/>
<dbReference type="BioGRID-ORCS" id="8291">
    <property type="hits" value="18 hits in 1150 CRISPR screens"/>
</dbReference>
<dbReference type="ChiTaRS" id="DYSF">
    <property type="organism name" value="human"/>
</dbReference>
<dbReference type="EvolutionaryTrace" id="O75923"/>
<dbReference type="GeneWiki" id="Dysferlin"/>
<dbReference type="GenomeRNAi" id="8291"/>
<dbReference type="Pharos" id="O75923">
    <property type="development level" value="Tbio"/>
</dbReference>
<dbReference type="PRO" id="PR:O75923"/>
<dbReference type="Proteomes" id="UP000005640">
    <property type="component" value="Chromosome 2"/>
</dbReference>
<dbReference type="RNAct" id="O75923">
    <property type="molecule type" value="protein"/>
</dbReference>
<dbReference type="Bgee" id="ENSG00000135636">
    <property type="expression patterns" value="Expressed in blood and 192 other cell types or tissues"/>
</dbReference>
<dbReference type="GO" id="GO:0034451">
    <property type="term" value="C:centriolar satellite"/>
    <property type="evidence" value="ECO:0000314"/>
    <property type="project" value="HPA"/>
</dbReference>
<dbReference type="GO" id="GO:0030659">
    <property type="term" value="C:cytoplasmic vesicle membrane"/>
    <property type="evidence" value="ECO:0000304"/>
    <property type="project" value="Reactome"/>
</dbReference>
<dbReference type="GO" id="GO:0005769">
    <property type="term" value="C:early endosome"/>
    <property type="evidence" value="ECO:0000314"/>
    <property type="project" value="UniProtKB"/>
</dbReference>
<dbReference type="GO" id="GO:0030139">
    <property type="term" value="C:endocytic vesicle"/>
    <property type="evidence" value="ECO:0000314"/>
    <property type="project" value="UniProtKB"/>
</dbReference>
<dbReference type="GO" id="GO:0005768">
    <property type="term" value="C:endosome"/>
    <property type="evidence" value="ECO:0000314"/>
    <property type="project" value="UniProtKB"/>
</dbReference>
<dbReference type="GO" id="GO:0070062">
    <property type="term" value="C:extracellular exosome"/>
    <property type="evidence" value="ECO:0007005"/>
    <property type="project" value="UniProtKB"/>
</dbReference>
<dbReference type="GO" id="GO:0005770">
    <property type="term" value="C:late endosome"/>
    <property type="evidence" value="ECO:0000314"/>
    <property type="project" value="UniProtKB"/>
</dbReference>
<dbReference type="GO" id="GO:0005886">
    <property type="term" value="C:plasma membrane"/>
    <property type="evidence" value="ECO:0000314"/>
    <property type="project" value="HPA"/>
</dbReference>
<dbReference type="GO" id="GO:0042383">
    <property type="term" value="C:sarcolemma"/>
    <property type="evidence" value="ECO:0000314"/>
    <property type="project" value="UniProtKB"/>
</dbReference>
<dbReference type="GO" id="GO:0030672">
    <property type="term" value="C:synaptic vesicle membrane"/>
    <property type="evidence" value="ECO:0000318"/>
    <property type="project" value="GO_Central"/>
</dbReference>
<dbReference type="GO" id="GO:0030315">
    <property type="term" value="C:T-tubule"/>
    <property type="evidence" value="ECO:0000314"/>
    <property type="project" value="UniProtKB"/>
</dbReference>
<dbReference type="GO" id="GO:0005509">
    <property type="term" value="F:calcium ion binding"/>
    <property type="evidence" value="ECO:0000314"/>
    <property type="project" value="UniProtKB"/>
</dbReference>
<dbReference type="GO" id="GO:0005544">
    <property type="term" value="F:calcium-dependent phospholipid binding"/>
    <property type="evidence" value="ECO:0000315"/>
    <property type="project" value="UniProtKB"/>
</dbReference>
<dbReference type="GO" id="GO:0005543">
    <property type="term" value="F:phospholipid binding"/>
    <property type="evidence" value="ECO:0000314"/>
    <property type="project" value="UniProtKB"/>
</dbReference>
<dbReference type="GO" id="GO:0002281">
    <property type="term" value="P:macrophage activation involved in immune response"/>
    <property type="evidence" value="ECO:0000315"/>
    <property type="project" value="MGI"/>
</dbReference>
<dbReference type="GO" id="GO:0002280">
    <property type="term" value="P:monocyte activation involved in immune response"/>
    <property type="evidence" value="ECO:0000315"/>
    <property type="project" value="MGI"/>
</dbReference>
<dbReference type="GO" id="GO:0050765">
    <property type="term" value="P:negative regulation of phagocytosis"/>
    <property type="evidence" value="ECO:0000315"/>
    <property type="project" value="MGI"/>
</dbReference>
<dbReference type="GO" id="GO:0046928">
    <property type="term" value="P:regulation of neurotransmitter secretion"/>
    <property type="evidence" value="ECO:0000318"/>
    <property type="project" value="GO_Central"/>
</dbReference>
<dbReference type="CDD" id="cd08373">
    <property type="entry name" value="C2A_Ferlin"/>
    <property type="match status" value="1"/>
</dbReference>
<dbReference type="CDD" id="cd04011">
    <property type="entry name" value="C2B_Ferlin"/>
    <property type="match status" value="1"/>
</dbReference>
<dbReference type="CDD" id="cd04018">
    <property type="entry name" value="C2C_Ferlin"/>
    <property type="match status" value="1"/>
</dbReference>
<dbReference type="CDD" id="cd04017">
    <property type="entry name" value="C2D_Ferlin"/>
    <property type="match status" value="1"/>
</dbReference>
<dbReference type="CDD" id="cd04037">
    <property type="entry name" value="C2E_Ferlin"/>
    <property type="match status" value="1"/>
</dbReference>
<dbReference type="CDD" id="cd08374">
    <property type="entry name" value="C2F_Ferlin"/>
    <property type="match status" value="1"/>
</dbReference>
<dbReference type="FunFam" id="2.60.40.150:FF:000009">
    <property type="entry name" value="dysferlin isoform X2"/>
    <property type="match status" value="1"/>
</dbReference>
<dbReference type="FunFam" id="2.60.40.150:FF:000021">
    <property type="entry name" value="dysferlin isoform X2"/>
    <property type="match status" value="1"/>
</dbReference>
<dbReference type="FunFam" id="2.60.40.150:FF:000026">
    <property type="entry name" value="dysferlin isoform X2"/>
    <property type="match status" value="1"/>
</dbReference>
<dbReference type="FunFam" id="2.60.40.150:FF:000033">
    <property type="entry name" value="dysferlin isoform X2"/>
    <property type="match status" value="1"/>
</dbReference>
<dbReference type="FunFam" id="2.60.40.150:FF:000037">
    <property type="entry name" value="dysferlin isoform X2"/>
    <property type="match status" value="1"/>
</dbReference>
<dbReference type="FunFam" id="2.60.40.150:FF:000061">
    <property type="entry name" value="dysferlin isoform X8"/>
    <property type="match status" value="1"/>
</dbReference>
<dbReference type="Gene3D" id="2.60.40.150">
    <property type="entry name" value="C2 domain"/>
    <property type="match status" value="6"/>
</dbReference>
<dbReference type="InterPro" id="IPR000008">
    <property type="entry name" value="C2_dom"/>
</dbReference>
<dbReference type="InterPro" id="IPR035892">
    <property type="entry name" value="C2_domain_sf"/>
</dbReference>
<dbReference type="InterPro" id="IPR037726">
    <property type="entry name" value="C2A_Ferlin"/>
</dbReference>
<dbReference type="InterPro" id="IPR037720">
    <property type="entry name" value="C2B_Ferlin"/>
</dbReference>
<dbReference type="InterPro" id="IPR037722">
    <property type="entry name" value="C2C_Ferlin"/>
</dbReference>
<dbReference type="InterPro" id="IPR037723">
    <property type="entry name" value="C2D_Ferlin"/>
</dbReference>
<dbReference type="InterPro" id="IPR037724">
    <property type="entry name" value="C2E_Ferlin"/>
</dbReference>
<dbReference type="InterPro" id="IPR037725">
    <property type="entry name" value="C2F_Ferlin"/>
</dbReference>
<dbReference type="InterPro" id="IPR012968">
    <property type="entry name" value="FerIin_dom"/>
</dbReference>
<dbReference type="InterPro" id="IPR037721">
    <property type="entry name" value="Ferlin"/>
</dbReference>
<dbReference type="InterPro" id="IPR012560">
    <property type="entry name" value="Ferlin_A-domain"/>
</dbReference>
<dbReference type="InterPro" id="IPR012561">
    <property type="entry name" value="Ferlin_B-domain"/>
</dbReference>
<dbReference type="InterPro" id="IPR032362">
    <property type="entry name" value="Ferlin_C"/>
</dbReference>
<dbReference type="InterPro" id="IPR055072">
    <property type="entry name" value="Ferlin_DSRM"/>
</dbReference>
<dbReference type="InterPro" id="IPR006614">
    <property type="entry name" value="Peroxin/Ferlin"/>
</dbReference>
<dbReference type="PANTHER" id="PTHR12546:SF44">
    <property type="entry name" value="DYSFERLIN"/>
    <property type="match status" value="1"/>
</dbReference>
<dbReference type="PANTHER" id="PTHR12546">
    <property type="entry name" value="FER-1-LIKE"/>
    <property type="match status" value="1"/>
</dbReference>
<dbReference type="Pfam" id="PF00168">
    <property type="entry name" value="C2"/>
    <property type="match status" value="7"/>
</dbReference>
<dbReference type="Pfam" id="PF22901">
    <property type="entry name" value="dsrm_Ferlin"/>
    <property type="match status" value="1"/>
</dbReference>
<dbReference type="Pfam" id="PF08165">
    <property type="entry name" value="FerA"/>
    <property type="match status" value="1"/>
</dbReference>
<dbReference type="Pfam" id="PF08150">
    <property type="entry name" value="FerB"/>
    <property type="match status" value="1"/>
</dbReference>
<dbReference type="Pfam" id="PF08151">
    <property type="entry name" value="FerI"/>
    <property type="match status" value="1"/>
</dbReference>
<dbReference type="Pfam" id="PF16165">
    <property type="entry name" value="Ferlin_C"/>
    <property type="match status" value="1"/>
</dbReference>
<dbReference type="SMART" id="SM00239">
    <property type="entry name" value="C2"/>
    <property type="match status" value="7"/>
</dbReference>
<dbReference type="SMART" id="SM00694">
    <property type="entry name" value="DysFC"/>
    <property type="match status" value="2"/>
</dbReference>
<dbReference type="SMART" id="SM00693">
    <property type="entry name" value="DysFN"/>
    <property type="match status" value="2"/>
</dbReference>
<dbReference type="SMART" id="SM01200">
    <property type="entry name" value="FerA"/>
    <property type="match status" value="1"/>
</dbReference>
<dbReference type="SMART" id="SM01201">
    <property type="entry name" value="FerB"/>
    <property type="match status" value="1"/>
</dbReference>
<dbReference type="SMART" id="SM01202">
    <property type="entry name" value="FerI"/>
    <property type="match status" value="1"/>
</dbReference>
<dbReference type="SUPFAM" id="SSF49562">
    <property type="entry name" value="C2 domain (Calcium/lipid-binding domain, CaLB)"/>
    <property type="match status" value="7"/>
</dbReference>
<dbReference type="PROSITE" id="PS50004">
    <property type="entry name" value="C2"/>
    <property type="match status" value="7"/>
</dbReference>
<reference key="1">
    <citation type="journal article" date="1998" name="Nat. Genet.">
        <title>Dysferlin, a novel skeletal muscle gene, is mutated in Miyoshi myopathy and limb girdle muscular dystrophy.</title>
        <authorList>
            <person name="Liu J."/>
            <person name="Aoki M."/>
            <person name="Illa I."/>
            <person name="Wu C."/>
            <person name="Fardeau M."/>
            <person name="Angelini C."/>
            <person name="Serrano C."/>
            <person name="Urtizberea J.A."/>
            <person name="Hentati F."/>
            <person name="Hamida M.B."/>
            <person name="Bohlega S."/>
            <person name="Culper E.J."/>
            <person name="Amato A.A."/>
            <person name="Bossie K."/>
            <person name="Oeltjen J."/>
            <person name="Bejaoui K."/>
            <person name="McKenna-Yasek D."/>
            <person name="Hosler B.A."/>
            <person name="Schurr E."/>
            <person name="Arahata K."/>
            <person name="de Jong P.J."/>
            <person name="Brown R.H. Jr."/>
        </authorList>
    </citation>
    <scope>NUCLEOTIDE SEQUENCE [MRNA] (ISOFORM 1)</scope>
    <scope>VARIANTS MMD1 VAL-1298; ARG-1857 AND CYS-2042</scope>
    <scope>VARIANTS LGMDR2 VAL-1298 AND CYS-2042</scope>
    <source>
        <tissue>Skeletal muscle</tissue>
    </source>
</reference>
<reference key="2">
    <citation type="journal article" date="2006" name="Hum. Genet.">
        <title>Identification and characterization of a novel human dysferlin transcript: dysferlin_v1.</title>
        <authorList>
            <person name="Pramono Z.A.D."/>
            <person name="Lai P.S."/>
            <person name="Tan C.L."/>
            <person name="Takeda S."/>
            <person name="Yee W.C."/>
        </authorList>
    </citation>
    <scope>NUCLEOTIDE SEQUENCE [MRNA] (ISOFORM 14)</scope>
    <scope>TISSUE SPECIFICITY</scope>
</reference>
<reference key="3">
    <citation type="journal article" date="2009" name="Hum. Genet.">
        <title>Identification and characterisation of human dysferlin transcript variants: implications for dysferlin mutational screening and isoforms.</title>
        <authorList>
            <person name="Pramono Z.A."/>
            <person name="Tan C.L."/>
            <person name="Seah I.A."/>
            <person name="See J.S."/>
            <person name="Kam S.Y."/>
            <person name="Lai P.S."/>
            <person name="Yee W.C."/>
        </authorList>
    </citation>
    <scope>NUCLEOTIDE SEQUENCE [GENOMIC DNA / MRNA] (ISOFORMS 2; 3; 4; 5; 6; 7; 8; 9; 10; 11; 12 AND 13)</scope>
    <scope>ALTERNATIVE PROMOTER USAGE</scope>
    <scope>ALTERNATIVE SPLICING</scope>
</reference>
<reference key="4">
    <citation type="journal article" date="2005" name="Nature">
        <title>Generation and annotation of the DNA sequences of human chromosomes 2 and 4.</title>
        <authorList>
            <person name="Hillier L.W."/>
            <person name="Graves T.A."/>
            <person name="Fulton R.S."/>
            <person name="Fulton L.A."/>
            <person name="Pepin K.H."/>
            <person name="Minx P."/>
            <person name="Wagner-McPherson C."/>
            <person name="Layman D."/>
            <person name="Wylie K."/>
            <person name="Sekhon M."/>
            <person name="Becker M.C."/>
            <person name="Fewell G.A."/>
            <person name="Delehaunty K.D."/>
            <person name="Miner T.L."/>
            <person name="Nash W.E."/>
            <person name="Kremitzki C."/>
            <person name="Oddy L."/>
            <person name="Du H."/>
            <person name="Sun H."/>
            <person name="Bradshaw-Cordum H."/>
            <person name="Ali J."/>
            <person name="Carter J."/>
            <person name="Cordes M."/>
            <person name="Harris A."/>
            <person name="Isak A."/>
            <person name="van Brunt A."/>
            <person name="Nguyen C."/>
            <person name="Du F."/>
            <person name="Courtney L."/>
            <person name="Kalicki J."/>
            <person name="Ozersky P."/>
            <person name="Abbott S."/>
            <person name="Armstrong J."/>
            <person name="Belter E.A."/>
            <person name="Caruso L."/>
            <person name="Cedroni M."/>
            <person name="Cotton M."/>
            <person name="Davidson T."/>
            <person name="Desai A."/>
            <person name="Elliott G."/>
            <person name="Erb T."/>
            <person name="Fronick C."/>
            <person name="Gaige T."/>
            <person name="Haakenson W."/>
            <person name="Haglund K."/>
            <person name="Holmes A."/>
            <person name="Harkins R."/>
            <person name="Kim K."/>
            <person name="Kruchowski S.S."/>
            <person name="Strong C.M."/>
            <person name="Grewal N."/>
            <person name="Goyea E."/>
            <person name="Hou S."/>
            <person name="Levy A."/>
            <person name="Martinka S."/>
            <person name="Mead K."/>
            <person name="McLellan M.D."/>
            <person name="Meyer R."/>
            <person name="Randall-Maher J."/>
            <person name="Tomlinson C."/>
            <person name="Dauphin-Kohlberg S."/>
            <person name="Kozlowicz-Reilly A."/>
            <person name="Shah N."/>
            <person name="Swearengen-Shahid S."/>
            <person name="Snider J."/>
            <person name="Strong J.T."/>
            <person name="Thompson J."/>
            <person name="Yoakum M."/>
            <person name="Leonard S."/>
            <person name="Pearman C."/>
            <person name="Trani L."/>
            <person name="Radionenko M."/>
            <person name="Waligorski J.E."/>
            <person name="Wang C."/>
            <person name="Rock S.M."/>
            <person name="Tin-Wollam A.-M."/>
            <person name="Maupin R."/>
            <person name="Latreille P."/>
            <person name="Wendl M.C."/>
            <person name="Yang S.-P."/>
            <person name="Pohl C."/>
            <person name="Wallis J.W."/>
            <person name="Spieth J."/>
            <person name="Bieri T.A."/>
            <person name="Berkowicz N."/>
            <person name="Nelson J.O."/>
            <person name="Osborne J."/>
            <person name="Ding L."/>
            <person name="Meyer R."/>
            <person name="Sabo A."/>
            <person name="Shotland Y."/>
            <person name="Sinha P."/>
            <person name="Wohldmann P.E."/>
            <person name="Cook L.L."/>
            <person name="Hickenbotham M.T."/>
            <person name="Eldred J."/>
            <person name="Williams D."/>
            <person name="Jones T.A."/>
            <person name="She X."/>
            <person name="Ciccarelli F.D."/>
            <person name="Izaurralde E."/>
            <person name="Taylor J."/>
            <person name="Schmutz J."/>
            <person name="Myers R.M."/>
            <person name="Cox D.R."/>
            <person name="Huang X."/>
            <person name="McPherson J.D."/>
            <person name="Mardis E.R."/>
            <person name="Clifton S.W."/>
            <person name="Warren W.C."/>
            <person name="Chinwalla A.T."/>
            <person name="Eddy S.R."/>
            <person name="Marra M.A."/>
            <person name="Ovcharenko I."/>
            <person name="Furey T.S."/>
            <person name="Miller W."/>
            <person name="Eichler E.E."/>
            <person name="Bork P."/>
            <person name="Suyama M."/>
            <person name="Torrents D."/>
            <person name="Waterston R.H."/>
            <person name="Wilson R.K."/>
        </authorList>
    </citation>
    <scope>NUCLEOTIDE SEQUENCE [LARGE SCALE GENOMIC DNA]</scope>
</reference>
<reference key="5">
    <citation type="submission" date="2005-09" db="EMBL/GenBank/DDBJ databases">
        <authorList>
            <person name="Mural R.J."/>
            <person name="Istrail S."/>
            <person name="Sutton G.G."/>
            <person name="Florea L."/>
            <person name="Halpern A.L."/>
            <person name="Mobarry C.M."/>
            <person name="Lippert R."/>
            <person name="Walenz B."/>
            <person name="Shatkay H."/>
            <person name="Dew I."/>
            <person name="Miller J.R."/>
            <person name="Flanigan M.J."/>
            <person name="Edwards N.J."/>
            <person name="Bolanos R."/>
            <person name="Fasulo D."/>
            <person name="Halldorsson B.V."/>
            <person name="Hannenhalli S."/>
            <person name="Turner R."/>
            <person name="Yooseph S."/>
            <person name="Lu F."/>
            <person name="Nusskern D.R."/>
            <person name="Shue B.C."/>
            <person name="Zheng X.H."/>
            <person name="Zhong F."/>
            <person name="Delcher A.L."/>
            <person name="Huson D.H."/>
            <person name="Kravitz S.A."/>
            <person name="Mouchard L."/>
            <person name="Reinert K."/>
            <person name="Remington K.A."/>
            <person name="Clark A.G."/>
            <person name="Waterman M.S."/>
            <person name="Eichler E.E."/>
            <person name="Adams M.D."/>
            <person name="Hunkapiller M.W."/>
            <person name="Myers E.W."/>
            <person name="Venter J.C."/>
        </authorList>
    </citation>
    <scope>NUCLEOTIDE SEQUENCE [LARGE SCALE GENOMIC DNA]</scope>
</reference>
<reference key="6">
    <citation type="journal article" date="1998" name="Nat. Genet.">
        <title>A gene related to Caenorhabditis elegans spermatogenesis factor fer-1 is mutated in limb-girdle muscular dystrophy type 2B.</title>
        <authorList>
            <person name="Bashir R."/>
            <person name="Britton S."/>
            <person name="Strachan T."/>
            <person name="Keers S."/>
            <person name="Vafiadaki E."/>
            <person name="Lako M."/>
            <person name="Richard I."/>
            <person name="Marchand S."/>
            <person name="Bourg N."/>
            <person name="Argov Z."/>
            <person name="Sadeh M."/>
            <person name="Mahjneh I."/>
            <person name="Marconi G."/>
            <person name="Passos-Bueno M.R."/>
            <person name="de Sa Moreira E."/>
            <person name="Zatz M."/>
            <person name="Beckmann J.S."/>
            <person name="Bushby K.M.D."/>
        </authorList>
    </citation>
    <scope>NUCLEOTIDE SEQUENCE [MRNA] OF 569-2080 (ISOFORMS 1/2/3/5/8/9/11)</scope>
    <scope>NUCLEOTIDE SEQUENCE [GENOMIC DNA] OF 1471-1628 (ISOFORMS 1/2/3/5/8/9/11)</scope>
    <source>
        <tissue>Placenta</tissue>
        <tissue>Skeletal muscle</tissue>
    </source>
</reference>
<reference key="7">
    <citation type="submission" date="2002-01" db="EMBL/GenBank/DDBJ databases">
        <title>The nucleotide sequence of a long cDNA clone isolated from human spleen.</title>
        <authorList>
            <person name="Jikuya H."/>
            <person name="Takano J."/>
            <person name="Nomura N."/>
            <person name="Kikuno R."/>
            <person name="Nagase T."/>
            <person name="Ohara O."/>
        </authorList>
    </citation>
    <scope>NUCLEOTIDE SEQUENCE [LARGE SCALE MRNA] OF 439-2080 (ISOFORM 15)</scope>
    <source>
        <tissue>Spleen</tissue>
    </source>
</reference>
<reference key="8">
    <citation type="journal article" date="2004" name="Nat. Genet.">
        <title>Complete sequencing and characterization of 21,243 full-length human cDNAs.</title>
        <authorList>
            <person name="Ota T."/>
            <person name="Suzuki Y."/>
            <person name="Nishikawa T."/>
            <person name="Otsuki T."/>
            <person name="Sugiyama T."/>
            <person name="Irie R."/>
            <person name="Wakamatsu A."/>
            <person name="Hayashi K."/>
            <person name="Sato H."/>
            <person name="Nagai K."/>
            <person name="Kimura K."/>
            <person name="Makita H."/>
            <person name="Sekine M."/>
            <person name="Obayashi M."/>
            <person name="Nishi T."/>
            <person name="Shibahara T."/>
            <person name="Tanaka T."/>
            <person name="Ishii S."/>
            <person name="Yamamoto J."/>
            <person name="Saito K."/>
            <person name="Kawai Y."/>
            <person name="Isono Y."/>
            <person name="Nakamura Y."/>
            <person name="Nagahari K."/>
            <person name="Murakami K."/>
            <person name="Yasuda T."/>
            <person name="Iwayanagi T."/>
            <person name="Wagatsuma M."/>
            <person name="Shiratori A."/>
            <person name="Sudo H."/>
            <person name="Hosoiri T."/>
            <person name="Kaku Y."/>
            <person name="Kodaira H."/>
            <person name="Kondo H."/>
            <person name="Sugawara M."/>
            <person name="Takahashi M."/>
            <person name="Kanda K."/>
            <person name="Yokoi T."/>
            <person name="Furuya T."/>
            <person name="Kikkawa E."/>
            <person name="Omura Y."/>
            <person name="Abe K."/>
            <person name="Kamihara K."/>
            <person name="Katsuta N."/>
            <person name="Sato K."/>
            <person name="Tanikawa M."/>
            <person name="Yamazaki M."/>
            <person name="Ninomiya K."/>
            <person name="Ishibashi T."/>
            <person name="Yamashita H."/>
            <person name="Murakawa K."/>
            <person name="Fujimori K."/>
            <person name="Tanai H."/>
            <person name="Kimata M."/>
            <person name="Watanabe M."/>
            <person name="Hiraoka S."/>
            <person name="Chiba Y."/>
            <person name="Ishida S."/>
            <person name="Ono Y."/>
            <person name="Takiguchi S."/>
            <person name="Watanabe S."/>
            <person name="Yosida M."/>
            <person name="Hotuta T."/>
            <person name="Kusano J."/>
            <person name="Kanehori K."/>
            <person name="Takahashi-Fujii A."/>
            <person name="Hara H."/>
            <person name="Tanase T.-O."/>
            <person name="Nomura Y."/>
            <person name="Togiya S."/>
            <person name="Komai F."/>
            <person name="Hara R."/>
            <person name="Takeuchi K."/>
            <person name="Arita M."/>
            <person name="Imose N."/>
            <person name="Musashino K."/>
            <person name="Yuuki H."/>
            <person name="Oshima A."/>
            <person name="Sasaki N."/>
            <person name="Aotsuka S."/>
            <person name="Yoshikawa Y."/>
            <person name="Matsunawa H."/>
            <person name="Ichihara T."/>
            <person name="Shiohata N."/>
            <person name="Sano S."/>
            <person name="Moriya S."/>
            <person name="Momiyama H."/>
            <person name="Satoh N."/>
            <person name="Takami S."/>
            <person name="Terashima Y."/>
            <person name="Suzuki O."/>
            <person name="Nakagawa S."/>
            <person name="Senoh A."/>
            <person name="Mizoguchi H."/>
            <person name="Goto Y."/>
            <person name="Shimizu F."/>
            <person name="Wakebe H."/>
            <person name="Hishigaki H."/>
            <person name="Watanabe T."/>
            <person name="Sugiyama A."/>
            <person name="Takemoto M."/>
            <person name="Kawakami B."/>
            <person name="Yamazaki M."/>
            <person name="Watanabe K."/>
            <person name="Kumagai A."/>
            <person name="Itakura S."/>
            <person name="Fukuzumi Y."/>
            <person name="Fujimori Y."/>
            <person name="Komiyama M."/>
            <person name="Tashiro H."/>
            <person name="Tanigami A."/>
            <person name="Fujiwara T."/>
            <person name="Ono T."/>
            <person name="Yamada K."/>
            <person name="Fujii Y."/>
            <person name="Ozaki K."/>
            <person name="Hirao M."/>
            <person name="Ohmori Y."/>
            <person name="Kawabata A."/>
            <person name="Hikiji T."/>
            <person name="Kobatake N."/>
            <person name="Inagaki H."/>
            <person name="Ikema Y."/>
            <person name="Okamoto S."/>
            <person name="Okitani R."/>
            <person name="Kawakami T."/>
            <person name="Noguchi S."/>
            <person name="Itoh T."/>
            <person name="Shigeta K."/>
            <person name="Senba T."/>
            <person name="Matsumura K."/>
            <person name="Nakajima Y."/>
            <person name="Mizuno T."/>
            <person name="Morinaga M."/>
            <person name="Sasaki M."/>
            <person name="Togashi T."/>
            <person name="Oyama M."/>
            <person name="Hata H."/>
            <person name="Watanabe M."/>
            <person name="Komatsu T."/>
            <person name="Mizushima-Sugano J."/>
            <person name="Satoh T."/>
            <person name="Shirai Y."/>
            <person name="Takahashi Y."/>
            <person name="Nakagawa K."/>
            <person name="Okumura K."/>
            <person name="Nagase T."/>
            <person name="Nomura N."/>
            <person name="Kikuchi H."/>
            <person name="Masuho Y."/>
            <person name="Yamashita R."/>
            <person name="Nakai K."/>
            <person name="Yada T."/>
            <person name="Nakamura Y."/>
            <person name="Ohara O."/>
            <person name="Isogai T."/>
            <person name="Sugano S."/>
        </authorList>
    </citation>
    <scope>NUCLEOTIDE SEQUENCE [LARGE SCALE MRNA] OF 1497-2080 (ISOFORMS 1/2/3/4/5/6/7/8/9/10/11/12/13/14)</scope>
    <source>
        <tissue>Mammary gland</tissue>
    </source>
</reference>
<reference key="9">
    <citation type="journal article" date="1999" name="Hum. Mol. Genet.">
        <title>Dysferlin is a plasma membrane protein and is expressed early in human development.</title>
        <authorList>
            <person name="Anderson L.V.B."/>
            <person name="Davison K."/>
            <person name="Moss J.A."/>
            <person name="Young C."/>
            <person name="Cullen M.J."/>
            <person name="Walsh J."/>
            <person name="Johnson M.A."/>
            <person name="Bashir R."/>
            <person name="Britton S."/>
            <person name="Keers S."/>
            <person name="Argov Z."/>
            <person name="Mahjneh I."/>
            <person name="Fougerousse F."/>
            <person name="Beckmann J.S."/>
            <person name="Bushby K.M.D."/>
        </authorList>
    </citation>
    <scope>SUBCELLULAR LOCATION</scope>
    <scope>DEVELOPMENTAL STAGE</scope>
    <scope>TISSUE SPECIFICITY</scope>
</reference>
<reference key="10">
    <citation type="journal article" date="1999" name="Hum. Mol. Genet.">
        <authorList>
            <person name="Anderson L.V.B."/>
            <person name="Davison K."/>
            <person name="Moss J.A."/>
            <person name="Young C."/>
            <person name="Cullen M.J."/>
            <person name="Walsh J."/>
            <person name="Johnson M.A."/>
            <person name="Bashir R."/>
            <person name="Britton S."/>
            <person name="Keers S."/>
            <person name="Argov Z."/>
            <person name="Mahjneh I."/>
            <person name="Fougerousse F."/>
            <person name="Beckmann J.S."/>
            <person name="Bushby K.M.D."/>
        </authorList>
    </citation>
    <scope>ERRATUM OF PUBMED:10196375</scope>
</reference>
<reference key="11">
    <citation type="journal article" date="1999" name="Neurology">
        <title>Dysferlin is a surface membrane-associated protein that is absent in Miyoshi myopathy.</title>
        <authorList>
            <person name="Matsuda C."/>
            <person name="Aoki M."/>
            <person name="Hayashi Y.K."/>
            <person name="Ho M.F."/>
            <person name="Arahata K."/>
            <person name="Brown R.H. Jr."/>
        </authorList>
    </citation>
    <scope>SUBCELLULAR LOCATION</scope>
</reference>
<reference key="12">
    <citation type="journal article" date="1999" name="Hum. Mol. Genet.">
        <title>Identical mutation in patients with limb girdle muscular dystrophy type 2B or Miyoshi myopathy suggests a role for modifier gene(s).</title>
        <authorList>
            <person name="Weiler T."/>
            <person name="Bashir R."/>
            <person name="Anderson L.V.B."/>
            <person name="Davison K."/>
            <person name="Moss J.A."/>
            <person name="Britton S."/>
            <person name="Nylen E."/>
            <person name="Keers S."/>
            <person name="Vafiadaki E."/>
            <person name="Greenberg C.R."/>
            <person name="Bushby K.M.D."/>
            <person name="Wrogemann K."/>
        </authorList>
    </citation>
    <scope>SUBCELLULAR LOCATION</scope>
    <scope>VARIANT MMD1 ARG-791</scope>
    <scope>VARIANT LGMDR2 ARG-791</scope>
</reference>
<reference key="13">
    <citation type="journal article" date="2001" name="Ann. Neurol.">
        <title>Distal anterior compartment myopathy: a dysferlin mutation causing a new muscular dystrophy phenotype.</title>
        <authorList>
            <person name="Illa I."/>
            <person name="Serrano-Munuera C."/>
            <person name="Gallardo E."/>
            <person name="Lasa A."/>
            <person name="Rojas-Garcia R."/>
            <person name="Palmer J."/>
            <person name="Gallano P."/>
            <person name="Baiget M."/>
            <person name="Matsuda C."/>
            <person name="Brown R.H."/>
        </authorList>
    </citation>
    <scope>INVOLVEMENT IN DMAT</scope>
</reference>
<reference key="14">
    <citation type="journal article" date="2001" name="Hum. Mol. Genet.">
        <title>The sarcolemmal proteins dysferlin and caveolin-3 interact in skeletal muscle.</title>
        <authorList>
            <person name="Matsuda C."/>
            <person name="Hayashi Y.K."/>
            <person name="Ogawa M."/>
            <person name="Aoki M."/>
            <person name="Murayama K."/>
            <person name="Nishino I."/>
            <person name="Nonaka I."/>
            <person name="Arahata K."/>
            <person name="Brown R.H. Jr."/>
        </authorList>
    </citation>
    <scope>INTERACTION WITH CAV3</scope>
    <scope>TISSUE SPECIFICITY</scope>
</reference>
<reference key="15">
    <citation type="journal article" date="2002" name="J. Biol. Chem.">
        <title>Calcium-sensitive phospholipid binding properties of normal and mutant ferlin C2 domains.</title>
        <authorList>
            <person name="Davis D.B."/>
            <person name="Doherty K.R."/>
            <person name="Delmonte A.J."/>
            <person name="McNally E.M."/>
        </authorList>
    </citation>
    <scope>TISSUE SPECIFICITY</scope>
    <scope>CHARACTERIZATION OF VARIANT MMD1 ASP-67</scope>
</reference>
<reference key="16">
    <citation type="journal article" date="2004" name="Muscle Nerve">
        <title>Developmental and tissue-specific regulation of a novel dysferlin isoform.</title>
        <authorList>
            <person name="Salani S."/>
            <person name="Lucchiari S."/>
            <person name="Fortunato F."/>
            <person name="Crimi M."/>
            <person name="Corti S."/>
            <person name="Locatelli F."/>
            <person name="Bossolasco P."/>
            <person name="Bresolin N."/>
            <person name="Comi G.P."/>
        </authorList>
    </citation>
    <scope>TISSUE SPECIFICITY</scope>
</reference>
<reference key="17">
    <citation type="journal article" date="2005" name="J. Neuropathol. Exp. Neurol.">
        <title>Dysferlin interacts with affixin (beta-parvin) at the sarcolemma.</title>
        <authorList>
            <person name="Matsuda C."/>
            <person name="Kameyama K."/>
            <person name="Tagawa K."/>
            <person name="Ogawa M."/>
            <person name="Suzuki A."/>
            <person name="Yamaji S."/>
            <person name="Okamoto H."/>
            <person name="Nishino I."/>
            <person name="Hayashi Y.K."/>
        </authorList>
    </citation>
    <scope>INTERACTION WITH PARVB</scope>
    <scope>SUBCELLULAR LOCATION</scope>
</reference>
<reference key="18">
    <citation type="journal article" date="2007" name="Biol. Reprod.">
        <title>Dysferlin is expressed in human placenta but does not associate with caveolin.</title>
        <authorList>
            <person name="Vandre D.D."/>
            <person name="Ackerman W.E."/>
            <person name="Kniss D.A."/>
            <person name="Tewari A.K."/>
            <person name="Mori M."/>
            <person name="Takizawa T."/>
            <person name="Robinson J.M."/>
        </authorList>
    </citation>
    <scope>IDENTIFICATION BY MASS SPECTROMETRY</scope>
    <scope>SUBCELLULAR LOCATION</scope>
    <scope>TISSUE SPECIFICITY</scope>
</reference>
<reference key="19">
    <citation type="journal article" date="2007" name="FASEB J.">
        <title>AHNAK, a novel component of the dysferlin protein complex, redistributes to the cytoplasm with dysferlin during skeletal muscle regeneration.</title>
        <authorList>
            <person name="Huang Y."/>
            <person name="Laval S.H."/>
            <person name="van Remoortere A."/>
            <person name="Baudier J."/>
            <person name="Benaud C."/>
            <person name="Anderson L.V."/>
            <person name="Straub V."/>
            <person name="Deelder A."/>
            <person name="Frants R.R."/>
            <person name="den Dunnen J.T."/>
            <person name="Bushby K."/>
            <person name="van der Maarel S.M."/>
        </authorList>
    </citation>
    <scope>INTERACTION WITH AHNAK AND AHNAK2</scope>
    <scope>SUBCELLULAR LOCATION</scope>
    <scope>CHARACTERIZATION OF VARIANT LGMDR2 ASP-67</scope>
    <scope>TISSUE SPECIFICITY</scope>
    <scope>IDENTIFICATION BY MASS SPECTROMETRY</scope>
</reference>
<reference key="20">
    <citation type="journal article" date="2007" name="FASEB J.">
        <title>From T-tubule to sarcolemma: damage-induced dysferlin translocation in early myogenesis.</title>
        <authorList>
            <person name="Klinge L."/>
            <person name="Laval S."/>
            <person name="Keers S."/>
            <person name="Haldane F."/>
            <person name="Straub V."/>
            <person name="Barresi R."/>
            <person name="Bushby K."/>
        </authorList>
    </citation>
    <scope>SUBCELLULAR LOCATION</scope>
    <scope>TISSUE SPECIFICITY</scope>
</reference>
<reference key="21">
    <citation type="journal article" date="2009" name="Neuromuscul. Disord.">
        <title>A new phenotype of dysferlinopathy with congenital onset.</title>
        <authorList>
            <person name="Paradas C."/>
            <person name="Gonzalez-Quereda L."/>
            <person name="De Luna N."/>
            <person name="Gallardo E."/>
            <person name="Garcia-Consuegra I."/>
            <person name="Gomez H."/>
            <person name="Cabello A."/>
            <person name="Illa I."/>
            <person name="Gallano P."/>
        </authorList>
    </citation>
    <scope>INVOLVEMENT IN LGMDR2</scope>
</reference>
<reference key="22">
    <citation type="journal article" date="2011" name="BMC Syst. Biol.">
        <title>Initial characterization of the human central proteome.</title>
        <authorList>
            <person name="Burkard T.R."/>
            <person name="Planyavsky M."/>
            <person name="Kaupe I."/>
            <person name="Breitwieser F.P."/>
            <person name="Buerckstuemmer T."/>
            <person name="Bennett K.L."/>
            <person name="Superti-Furga G."/>
            <person name="Colinge J."/>
        </authorList>
    </citation>
    <scope>IDENTIFICATION BY MASS SPECTROMETRY [LARGE SCALE ANALYSIS]</scope>
</reference>
<reference key="23">
    <citation type="journal article" date="2014" name="Biophys. J.">
        <title>Quantitation of the calcium and membrane binding properties of the c2 domains of dysferlin.</title>
        <authorList>
            <person name="Abdullah N."/>
            <person name="Padmanarayana M."/>
            <person name="Marty N.J."/>
            <person name="Johnson C.P."/>
        </authorList>
    </citation>
    <scope>DOMAIN C2</scope>
    <scope>CALCIUM-BINDING</scope>
    <scope>MUTAGENESIS OF ASP-16; ASP-21; ASP-71; ARG-79 AND PHE-80</scope>
</reference>
<reference key="24">
    <citation type="journal article" date="2014" name="FASEB J.">
        <title>Fam65b is important for formation of the HDAC6-dysferlin protein complex during myogenic cell differentiation.</title>
        <authorList>
            <person name="Balasubramanian A."/>
            <person name="Kawahara G."/>
            <person name="Gupta V.A."/>
            <person name="Rozkalne A."/>
            <person name="Beauvais A."/>
            <person name="Kunkel L.M."/>
            <person name="Gussoni E."/>
        </authorList>
    </citation>
    <scope>INTERACTION WITH RIPOR2</scope>
</reference>
<reference key="25">
    <citation type="journal article" date="2014" name="J. Proteomics">
        <title>An enzyme assisted RP-RPLC approach for in-depth analysis of human liver phosphoproteome.</title>
        <authorList>
            <person name="Bian Y."/>
            <person name="Song C."/>
            <person name="Cheng K."/>
            <person name="Dong M."/>
            <person name="Wang F."/>
            <person name="Huang J."/>
            <person name="Sun D."/>
            <person name="Wang L."/>
            <person name="Ye M."/>
            <person name="Zou H."/>
        </authorList>
    </citation>
    <scope>PHOSPHORYLATION [LARGE SCALE ANALYSIS] AT THR-166</scope>
    <scope>PHOSPHORYLATION [LARGE SCALE ANALYSIS] AT SER-167 AND THR-198 (ISOFORMS 11; 13 AND 8)</scope>
    <scope>PHOSPHORYLATION [LARGE SCALE ANALYSIS] AT SER-166 AND THR-197 (ISOFORMS 2; 5 AND 7)</scope>
    <scope>IDENTIFICATION BY MASS SPECTROMETRY [LARGE SCALE ANALYSIS]</scope>
    <source>
        <tissue>Liver</tissue>
    </source>
</reference>
<reference key="26">
    <citation type="journal article" date="2014" name="BMC Struct. Biol.">
        <title>Crystal structures of the human Dysferlin inner DysF domain.</title>
        <authorList>
            <person name="Sula A."/>
            <person name="Cole A.R."/>
            <person name="Yeats C."/>
            <person name="Orengo C."/>
            <person name="Keep N.H."/>
        </authorList>
    </citation>
    <scope>X-RAY CRYSTALLOGRAPHY (1.9 ANGSTROMS) OF 942-1052</scope>
</reference>
<reference key="27">
    <citation type="journal article" date="2014" name="Structure">
        <title>Alternate splicing of dysferlin C2A confers Ca(2+)-dependent and Ca(2+)-independent binding for membrane repair.</title>
        <authorList>
            <person name="Fuson K."/>
            <person name="Rice A."/>
            <person name="Mahling R."/>
            <person name="Snow A."/>
            <person name="Nayak K."/>
            <person name="Shanbhogue P."/>
            <person name="Meyer A.G."/>
            <person name="Redpath G.M."/>
            <person name="Hinderliter A."/>
            <person name="Cooper S.T."/>
            <person name="Sutton R.B."/>
        </authorList>
    </citation>
    <scope>X-RAY CRYSTALLOGRAPHY (1.76 ANGSTROMS) OF 1-124 IN COMPLEX WITH CALCIUM</scope>
    <scope>CALCIUM-BINDING (ISOFORMS 1 AND 14)</scope>
    <scope>SUBCELLULAR LOCATION</scope>
    <scope>DOMAIN</scope>
    <scope>LIPID-BINDING</scope>
    <scope>TISSUE SPECIFICITY</scope>
</reference>
<reference key="28">
    <citation type="journal article" date="1999" name="Proc. Jpn. Acad.">
        <title>Molecular genetic analysis of dysferlin in Japanese patients with Miyoshi myopathy.</title>
        <authorList>
            <person name="Matsumura T."/>
            <person name="Aoki M."/>
            <person name="Nagano A."/>
            <person name="Hayashi Y.K."/>
            <person name="Asada C."/>
            <person name="Ogawa M."/>
            <person name="Yamanaka G."/>
            <person name="Goto K."/>
            <person name="Nakagawa M."/>
            <person name="Oka H."/>
            <person name="Sahashi K."/>
            <person name="Kouhara N."/>
            <person name="Saito Y."/>
            <person name="Brown R.H. Jr."/>
            <person name="Nonaka I."/>
            <person name="Arahata K."/>
        </authorList>
    </citation>
    <scope>VARIANT MMD1 CYS-999</scope>
</reference>
<reference key="29">
    <citation type="journal article" date="2000" name="Neurology">
        <title>Identical dysferlin mutation in limb-girdle muscular dystrophy type 2B and distal myopathy.</title>
        <authorList>
            <person name="Illarioshkin S.N."/>
            <person name="Ivanova-Smolenskaya I.A."/>
            <person name="Greenberg C.R."/>
            <person name="Nylen E."/>
            <person name="Sukhorukov V.S."/>
            <person name="Poleshchuk V.V."/>
            <person name="Markova E.D."/>
            <person name="Wrogemann K."/>
        </authorList>
    </citation>
    <scope>VARIANT MMD1 ASP-67</scope>
    <scope>VARIANT LGMDR2 ASP-67</scope>
</reference>
<reference key="30">
    <citation type="journal article" date="2001" name="Neurology">
        <title>Genomic organization of the dysferlin gene and novel mutations in Miyoshi myopathy.</title>
        <authorList>
            <person name="Aoki M."/>
            <person name="Liu J."/>
            <person name="Richard I."/>
            <person name="Bashir R."/>
            <person name="Britton S."/>
            <person name="Keers S.M."/>
            <person name="Oeltjen J."/>
            <person name="Brown H.E.V."/>
            <person name="Marchand S."/>
            <person name="Bourg N."/>
            <person name="Beley C."/>
            <person name="McKenna-Yasek D."/>
            <person name="Arahata K."/>
            <person name="Bohlega S."/>
            <person name="Cupler E."/>
            <person name="Illa I."/>
            <person name="Majneh I."/>
            <person name="Barohn R.J."/>
            <person name="Urtizberea J.A."/>
            <person name="Fardeau M."/>
            <person name="Amato A."/>
            <person name="Angelini C."/>
            <person name="Bushby K."/>
            <person name="Beckmann J.S."/>
            <person name="Brown R.H. Jr."/>
        </authorList>
    </citation>
    <scope>VARIANTS MMD1 HIS-1046 AND GLN-2000</scope>
</reference>
<reference key="31">
    <citation type="journal article" date="2003" name="Neurology">
        <title>Dysferlin mutations in Japanese Miyoshi myopathy: relationship to phenotype.</title>
        <authorList>
            <person name="Takahashi T."/>
            <person name="Aoki M."/>
            <person name="Tateyama M."/>
            <person name="Kondo E."/>
            <person name="Mizuno T."/>
            <person name="Onodera Y."/>
            <person name="Takano R."/>
            <person name="Kawai H."/>
            <person name="Kamakura K."/>
            <person name="Mochizuki H."/>
            <person name="Shizuka-Ikeda M."/>
            <person name="Nakagawa M."/>
            <person name="Yoshida Y."/>
            <person name="Akanuma J."/>
            <person name="Hoshino K."/>
            <person name="Saito H."/>
            <person name="Nishizawa M."/>
            <person name="Kato S."/>
            <person name="Saito K."/>
            <person name="Miyachi T."/>
            <person name="Yamashita H."/>
            <person name="Kawai M."/>
            <person name="Matsumura T."/>
            <person name="Kuzuhara S."/>
            <person name="Ibi T."/>
            <person name="Sahashi K."/>
            <person name="Nakai H."/>
            <person name="Kohnosu T."/>
            <person name="Nonaka I."/>
            <person name="Arahata K."/>
            <person name="Brown R.H. Jr."/>
            <person name="Saito H."/>
            <person name="Itoyama Y."/>
        </authorList>
    </citation>
    <scope>VARIANTS MMD1 CYS-999 AND GLU-1679</scope>
    <scope>VARIANT HIS-1581</scope>
</reference>
<reference key="32">
    <citation type="journal article" date="2003" name="Neuromuscul. Disord.">
        <title>Molecular analysis of LGMD-2B and MM patients: identification of novel DYSF mutations and possible founder effect in the Italian population.</title>
        <authorList>
            <person name="Cagliani R."/>
            <person name="Fortunato F."/>
            <person name="Giorda R."/>
            <person name="Rodolico C."/>
            <person name="Bonaglia M.C."/>
            <person name="Sironi M."/>
            <person name="D'Angelo M.G."/>
            <person name="Prelle A."/>
            <person name="Locatelli F."/>
            <person name="Toscano A."/>
            <person name="Bresolin N."/>
            <person name="Comi G.P."/>
        </authorList>
    </citation>
    <scope>VARIANTS LGMDR2 TRP-959; GLN-1038 AND LYS-1335</scope>
    <scope>VARIANTS GLN-1022; ALA-GLU-1065 INS AND LEU-1331</scope>
</reference>
<reference key="33">
    <citation type="journal article" date="2004" name="Arch. Neurol.">
        <title>Phenotypic features and genetic findings in 2 Chinese families with Miyoshi distal myopathy.</title>
        <authorList>
            <person name="Ro L.-S."/>
            <person name="Lee-Chen G.-J."/>
            <person name="Lin T.-C."/>
            <person name="Wu Y.-R."/>
            <person name="Chen C.-M."/>
            <person name="Lin C.-Y."/>
            <person name="Chen S.-T."/>
        </authorList>
    </citation>
    <scope>VARIANTS MMD1 VAL-426 AND LEU-2068</scope>
</reference>
<reference key="34">
    <citation type="journal article" date="2004" name="Eur. J. Neurol.">
        <title>Dysferlin mutation analysis in a group of Italian patients with limb-girdle muscular dystrophy and Miyoshi myopathy.</title>
        <authorList>
            <person name="Kawabe K."/>
            <person name="Goto K."/>
            <person name="Nishino I."/>
            <person name="Angelini C."/>
            <person name="Hayashi Y.K."/>
        </authorList>
    </citation>
    <scope>VARIANTS MMD1 ARG-618; CYS-1041; LYS-1335; ARG-1361 AND ARG-1662</scope>
    <scope>VARIANTS LGMDR2 LYS-1335 AND CYS-1505</scope>
    <scope>VARIANTS GLN-1022 AND ALA-GLU-1065 INS</scope>
</reference>
<reference key="35">
    <citation type="journal article" date="2004" name="Muscle Nerve">
        <title>Novel dysferlin mutations and characteristic muscle atrophy in late-onset Miyoshi myopathy.</title>
        <authorList>
            <person name="Suzuki N."/>
            <person name="Aoki M."/>
            <person name="Takahashi T."/>
            <person name="Takano D."/>
            <person name="Asano M."/>
            <person name="Shiga Y."/>
            <person name="Onodera Y."/>
            <person name="Tateyama M."/>
            <person name="Itoyama Y."/>
        </authorList>
    </citation>
    <scope>VARIANTS MMD1 ASP-1842 AND PRO-1922</scope>
</reference>
<reference key="36">
    <citation type="journal article" date="2004" name="Yonsei Med. J.">
        <title>Identification of a dysferlin gene mutation in a Korean case with Miyoshi myopathy.</title>
        <authorList>
            <person name="Oh S.-H."/>
            <person name="Kim T.-S."/>
            <person name="Choi Y.-C."/>
        </authorList>
    </citation>
    <scope>VARIANT MMD1 GLN-389</scope>
</reference>
<reference key="37">
    <citation type="journal article" date="2005" name="Hum. Mutat.">
        <title>Dysferlin mutations in LGMD2B, Miyoshi myopathy, and atypical dysferlinopathies.</title>
        <authorList>
            <person name="Nguyen K."/>
            <person name="Bassez G."/>
            <person name="Bernard R."/>
            <person name="Krahn M."/>
            <person name="Labelle V."/>
            <person name="Figarella-Branger D."/>
            <person name="Pouget J."/>
            <person name="Hammouda el H."/>
            <person name="Beroud C."/>
            <person name="Urtizberea A."/>
            <person name="Eymard B."/>
            <person name="Leturcq F."/>
            <person name="Ben-Yaou R."/>
            <person name="Levy N."/>
        </authorList>
    </citation>
    <scope>VARIANTS GLU-170 AND TRP-253</scope>
    <scope>VARIANTS LGMDR2 TRP-555 AND MET-1208</scope>
    <scope>VARIANTS MMD1 GLU-299; TRP-456; TRP-555; HIS-1046 AND GLN-1693</scope>
    <scope>VARIANT PROXIMODISTAL MYOPATHY VAL-1276</scope>
    <scope>VARIANT PSEUDOMETABOLIC MYOPATHY PRO-266</scope>
    <scope>VARIANTS VAL-189; LEU-1331; SER-1351 AND VAL-1748</scope>
</reference>
<reference key="38">
    <citation type="journal article" date="2005" name="Hum. Mutat.">
        <authorList>
            <person name="Nguyen K."/>
            <person name="Bassez G."/>
            <person name="Bernard R."/>
            <person name="Krahn M."/>
            <person name="Labelle V."/>
            <person name="Figarella-Branger D."/>
            <person name="Pouget J."/>
            <person name="Hammouda el H."/>
            <person name="Beroud C."/>
            <person name="Urtizberea A."/>
            <person name="Eymard B."/>
            <person name="Leturcq F."/>
            <person name="Levy N."/>
        </authorList>
    </citation>
    <scope>ERRATUM OF PUBMED:16010686</scope>
</reference>
<reference key="39">
    <citation type="journal article" date="2005" name="Hum. Mutat.">
        <title>Mutation finding in patients with dysferlin deficiency and role of the dysferlin interacting proteins annexin A1 and A2 in muscular dystrophies.</title>
        <authorList>
            <person name="Cagliani R."/>
            <person name="Magri F."/>
            <person name="Toscano A."/>
            <person name="Merlini L."/>
            <person name="Fortunato F."/>
            <person name="Lamperti C."/>
            <person name="Rodolico C."/>
            <person name="Prelle A."/>
            <person name="Sironi M."/>
            <person name="Aguennouz M."/>
            <person name="Ciscato P."/>
            <person name="Uncini A."/>
            <person name="Moggio M."/>
            <person name="Bresolin N."/>
            <person name="Comi G.P."/>
        </authorList>
    </citation>
    <scope>VARIANTS MMD1 TRP-959; TRP-1693; ASN-1837 AND GLY-1942 AND CYS-2042</scope>
    <scope>VARIANTS LGMDR2 ARG-621; TRP-959; GLN-1038; LYS-1335 AND CYS-2042</scope>
    <scope>VARIANTS GLU-170; LEU-374 AND SER-1678</scope>
</reference>
<reference key="40">
    <citation type="journal article" date="2006" name="Hum. Mutat.">
        <title>Novel sequence variants in dysferlin-deficient muscular dystrophy leading to mRNA decay and possible C2-domain misfolding.</title>
        <authorList>
            <person name="Wenzel K."/>
            <person name="Carl M."/>
            <person name="Perrot A."/>
            <person name="Zabojszcza J."/>
            <person name="Assadi M."/>
            <person name="Ebeling M."/>
            <person name="Geier C."/>
            <person name="Robinson P.N."/>
            <person name="Kress W."/>
            <person name="Osterziel K.-J."/>
            <person name="Spuler S."/>
        </authorList>
    </citation>
    <scope>VARIANTS LGMDR2 ARG-299 AND PRO-1341</scope>
</reference>
<reference key="41">
    <citation type="journal article" date="2006" name="J. Neurol. Sci.">
        <title>Mutation impact on dysferlin inferred from database analysis and computer-based structural predictions.</title>
        <authorList>
            <person name="Therrien C."/>
            <person name="Dodig D."/>
            <person name="Karpati G."/>
            <person name="Sinnreich M."/>
        </authorList>
    </citation>
    <scope>VARIANTS LGMDR2 ARG-791; CYS-930; TRP-1768 AND CYS-2042</scope>
    <scope>VARIANT ALA-GLU-1065 INS</scope>
</reference>
<reference key="42">
    <citation type="journal article" date="2006" name="Science">
        <title>The consensus coding sequences of human breast and colorectal cancers.</title>
        <authorList>
            <person name="Sjoeblom T."/>
            <person name="Jones S."/>
            <person name="Wood L.D."/>
            <person name="Parsons D.W."/>
            <person name="Lin J."/>
            <person name="Barber T.D."/>
            <person name="Mandelker D."/>
            <person name="Leary R.J."/>
            <person name="Ptak J."/>
            <person name="Silliman N."/>
            <person name="Szabo S."/>
            <person name="Buckhaults P."/>
            <person name="Farrell C."/>
            <person name="Meeh P."/>
            <person name="Markowitz S.D."/>
            <person name="Willis J."/>
            <person name="Dawson D."/>
            <person name="Willson J.K.V."/>
            <person name="Gazdar A.F."/>
            <person name="Hartigan J."/>
            <person name="Wu L."/>
            <person name="Liu C."/>
            <person name="Parmigiani G."/>
            <person name="Park B.H."/>
            <person name="Bachman K.E."/>
            <person name="Papadopoulos N."/>
            <person name="Vogelstein B."/>
            <person name="Kinzler K.W."/>
            <person name="Velculescu V.E."/>
        </authorList>
    </citation>
    <scope>VARIANTS [LARGE SCALE ANALYSIS] MET-1325 AND VAL-1349</scope>
</reference>
<reference key="43">
    <citation type="journal article" date="2007" name="Neurology">
        <title>Symptomatic dysferlin gene mutation carriers: characterization of two cases.</title>
        <authorList>
            <person name="Illa I."/>
            <person name="De Luna N."/>
            <person name="Dominguez-Perles R."/>
            <person name="Rojas-Garcia R."/>
            <person name="Paradas C."/>
            <person name="Palmer J."/>
            <person name="Marquez C."/>
            <person name="Gallano P."/>
            <person name="Gallardo E."/>
        </authorList>
    </citation>
    <scope>VARIANTS LGMDR2 TYR-625 AND GLY-1734</scope>
    <scope>VARIANT MMD1 ARG-519</scope>
</reference>
<reference key="44">
    <citation type="journal article" date="2008" name="Ann. Neurol.">
        <title>Dysferlin-deficient muscular dystrophy features amyloidosis.</title>
        <authorList>
            <person name="Spuler S."/>
            <person name="Carl M."/>
            <person name="Zabojszcza J."/>
            <person name="Straub V."/>
            <person name="Bushby K."/>
            <person name="Moore S.A."/>
            <person name="Baehring S."/>
            <person name="Wenzel K."/>
            <person name="Vinkemeier U."/>
            <person name="Rocken C."/>
        </authorList>
    </citation>
    <scope>VARIANT LGMDR2 ARG-299</scope>
    <scope>VARIANT MMD1 TRP-299</scope>
</reference>
<reference key="45">
    <citation type="journal article" date="2009" name="Hum. Mutat.">
        <title>Analysis of the DYSF mutational spectrum in a large cohort of patients.</title>
        <authorList>
            <person name="Krahn M."/>
            <person name="Beroud C."/>
            <person name="Labelle V."/>
            <person name="Nguyen K."/>
            <person name="Bernard R."/>
            <person name="Bassez G."/>
            <person name="Figarella-Branger D."/>
            <person name="Fernandez C."/>
            <person name="Bouvenot J."/>
            <person name="Richard I."/>
            <person name="Ollagnon-Roman E."/>
            <person name="Bevilacqua J.A."/>
            <person name="Salvo E."/>
            <person name="Attarian S."/>
            <person name="Chapon F."/>
            <person name="Pellissier J.-F."/>
            <person name="Pouget J."/>
            <person name="Hammouda el H."/>
            <person name="Laforet P."/>
            <person name="Urtizberea J.A."/>
            <person name="Eymard B."/>
            <person name="Leturcq F."/>
            <person name="Levy N."/>
        </authorList>
    </citation>
    <scope>VARIANTS LGMDR2 ARG-52; ARG-155; GLU-234; THR-284; TRP-555; ARG-618; ARG-731; CYS-930; PRO-1228; THR-1526; ASP-1543; TRP-1768; SER-1970 AND CYS-2042</scope>
    <scope>VARIANTS MMD1 GLU-299; 386-PHE--ASP-390 DELINS TYR; ARG-426; TRP-456; TRP-555; LEU-1029; HIS-1046; HIS-1046; GLN-1693; 1938-THR-ALA-1939 DEL AND CYS-2042</scope>
    <scope>VARIANTS GLU-170; TRP-253 AND TRP-555</scope>
    <scope>VARIANTS PROXIMODISTAL MYOPATHY ARG-299; ARG-340; VAL-1748; TRP-1768 AND CYS-2042</scope>
    <scope>VARIANT PSEUDOMETABOLIC MYOPATHY PRO-266</scope>
    <scope>VARIANTS VAL-84; VAL-189; ALA-335; LEU-374; ASN-390; GLN-819; GLN-1022; GLN-1038; VAL-1276; VAL-1325; ASN-1837 AND SER-1967</scope>
</reference>